<accession>O15269</accession>
<accession>A8K681</accession>
<accession>Q5VWB4</accession>
<accession>Q96IX6</accession>
<evidence type="ECO:0000250" key="1"/>
<evidence type="ECO:0000250" key="2">
    <source>
        <dbReference type="UniProtKB" id="O35704"/>
    </source>
</evidence>
<evidence type="ECO:0000255" key="3"/>
<evidence type="ECO:0000269" key="4">
    <source>
    </source>
</evidence>
<evidence type="ECO:0000269" key="5">
    <source>
    </source>
</evidence>
<evidence type="ECO:0000269" key="6">
    <source>
    </source>
</evidence>
<evidence type="ECO:0000269" key="7">
    <source>
    </source>
</evidence>
<evidence type="ECO:0000269" key="8">
    <source>
    </source>
</evidence>
<evidence type="ECO:0000269" key="9">
    <source>
    </source>
</evidence>
<evidence type="ECO:0000269" key="10">
    <source>
    </source>
</evidence>
<evidence type="ECO:0000269" key="11">
    <source>
    </source>
</evidence>
<evidence type="ECO:0000269" key="12">
    <source>
    </source>
</evidence>
<evidence type="ECO:0000269" key="13">
    <source>
    </source>
</evidence>
<evidence type="ECO:0000269" key="14">
    <source>
    </source>
</evidence>
<evidence type="ECO:0000269" key="15">
    <source>
    </source>
</evidence>
<evidence type="ECO:0000269" key="16">
    <source>
    </source>
</evidence>
<evidence type="ECO:0000269" key="17">
    <source>
    </source>
</evidence>
<evidence type="ECO:0000269" key="18">
    <source>
    </source>
</evidence>
<evidence type="ECO:0000269" key="19">
    <source>
    </source>
</evidence>
<evidence type="ECO:0000269" key="20">
    <source>
    </source>
</evidence>
<evidence type="ECO:0000269" key="21">
    <source>
    </source>
</evidence>
<evidence type="ECO:0000269" key="22">
    <source>
    </source>
</evidence>
<evidence type="ECO:0000269" key="23">
    <source>
    </source>
</evidence>
<evidence type="ECO:0000269" key="24">
    <source>
    </source>
</evidence>
<evidence type="ECO:0000269" key="25">
    <source>
    </source>
</evidence>
<evidence type="ECO:0000269" key="26">
    <source>
    </source>
</evidence>
<evidence type="ECO:0000269" key="27">
    <source>
    </source>
</evidence>
<evidence type="ECO:0000269" key="28">
    <source>
    </source>
</evidence>
<evidence type="ECO:0000269" key="29">
    <source>
    </source>
</evidence>
<evidence type="ECO:0000303" key="30">
    <source>
    </source>
</evidence>
<evidence type="ECO:0000305" key="31"/>
<evidence type="ECO:0000305" key="32">
    <source>
    </source>
</evidence>
<evidence type="ECO:0007744" key="33">
    <source>
        <dbReference type="PDB" id="6M4N"/>
    </source>
</evidence>
<evidence type="ECO:0007744" key="34">
    <source>
        <dbReference type="PDB" id="6M4O"/>
    </source>
</evidence>
<evidence type="ECO:0007744" key="35">
    <source>
        <dbReference type="PDB" id="7CQI"/>
    </source>
</evidence>
<evidence type="ECO:0007744" key="36">
    <source>
        <dbReference type="PDB" id="7CQK"/>
    </source>
</evidence>
<evidence type="ECO:0007744" key="37">
    <source>
        <dbReference type="PDB" id="7K0I"/>
    </source>
</evidence>
<evidence type="ECO:0007744" key="38">
    <source>
        <dbReference type="PDB" id="7K0J"/>
    </source>
</evidence>
<evidence type="ECO:0007744" key="39">
    <source>
        <dbReference type="PDB" id="7K0K"/>
    </source>
</evidence>
<evidence type="ECO:0007744" key="40">
    <source>
        <dbReference type="PDB" id="7K0L"/>
    </source>
</evidence>
<evidence type="ECO:0007744" key="41">
    <source>
        <dbReference type="PDB" id="7K0M"/>
    </source>
</evidence>
<evidence type="ECO:0007744" key="42">
    <source>
        <dbReference type="PDB" id="7K0N"/>
    </source>
</evidence>
<evidence type="ECO:0007744" key="43">
    <source>
        <dbReference type="PDB" id="7K0O"/>
    </source>
</evidence>
<evidence type="ECO:0007744" key="44">
    <source>
        <dbReference type="PDB" id="7K0P"/>
    </source>
</evidence>
<evidence type="ECO:0007744" key="45">
    <source>
        <dbReference type="PDB" id="7K0Q"/>
    </source>
</evidence>
<evidence type="ECO:0007744" key="46">
    <source>
        <dbReference type="PDB" id="7YIU"/>
    </source>
</evidence>
<evidence type="ECO:0007744" key="47">
    <source>
        <dbReference type="PDB" id="7YIY"/>
    </source>
</evidence>
<evidence type="ECO:0007744" key="48">
    <source>
        <dbReference type="PDB" id="7YJ1"/>
    </source>
</evidence>
<evidence type="ECO:0007744" key="49">
    <source>
        <dbReference type="PDB" id="7YJ2"/>
    </source>
</evidence>
<evidence type="ECO:0007829" key="50">
    <source>
        <dbReference type="PDB" id="6M4O"/>
    </source>
</evidence>
<evidence type="ECO:0007829" key="51">
    <source>
        <dbReference type="PDB" id="7K0J"/>
    </source>
</evidence>
<evidence type="ECO:0007829" key="52">
    <source>
        <dbReference type="PDB" id="7K0K"/>
    </source>
</evidence>
<evidence type="ECO:0007829" key="53">
    <source>
        <dbReference type="PDB" id="7K0M"/>
    </source>
</evidence>
<evidence type="ECO:0007829" key="54">
    <source>
        <dbReference type="PDB" id="7YIU"/>
    </source>
</evidence>
<evidence type="ECO:0007829" key="55">
    <source>
        <dbReference type="PDB" id="7YIY"/>
    </source>
</evidence>
<sequence length="473" mass="52744">MATATEQWVLVEMVQALYEAPAYHLILEGILILWIIRLLFSKTYKLQERSDLTVKEKEELIEEWQPEPLVPPVPKDHPALNYNIVSGPPSHKTVVNGKECINFASFNFLGLLDNPRVKAAALASLKKYGVGTCGPRGFYGTFDVHLDLEDRLAKFMKTEEAIIYSYGFATIASAIPAYSKRGDIVFVDRAACFAIQKGLQASRSDIKLFKHNDMADLERLLKEQEIEDQKNPRKARVTRRFIVVEGLYMNTGTICPLPELVKLKYKYKARIFLEESLSFGVLGEHGRGVTEHYGINIDDIDLISANMENALASIGGFCCGRSFVIDHQRLSGQGYCFSASLPPLLAAAAIEALNIMEENPGIFAVLKEKCGQIHKALQGISGLKVVGESLSPAFHLQLEESTGSREQDVRLLQEIVDQCMNRSIALTQARYLEKEEKCLPPPSIRVVVTVEQTEEELERAASTIKEVAQAVLL</sequence>
<gene>
    <name type="primary">SPTLC1</name>
    <name type="synonym">LCB1</name>
</gene>
<proteinExistence type="evidence at protein level"/>
<reference key="1">
    <citation type="journal article" date="1997" name="Eur. J. Biochem.">
        <title>Human and murine serine-palmitoyl-CoA transferase. Cloning, expression and characterization of the key enzyme in sphingolipid synthesis.</title>
        <authorList>
            <person name="Weiss B."/>
            <person name="Stoffel W."/>
        </authorList>
    </citation>
    <scope>NUCLEOTIDE SEQUENCE [MRNA] (ISOFORM 1)</scope>
    <source>
        <tissue>Kidney</tissue>
    </source>
</reference>
<reference key="2">
    <citation type="journal article" date="2001" name="Nat. Genet.">
        <title>Mutations in SPTLC1, encoding serine palmitoyltransferase, long chain base subunit-1, cause hereditary sensory neuropathy type I.</title>
        <authorList>
            <person name="Dawkins J.L."/>
            <person name="Hulme D.J."/>
            <person name="Brahmbhatt S.B."/>
            <person name="Auer-Grumbach M."/>
            <person name="Nicholson G.A."/>
        </authorList>
    </citation>
    <scope>NUCLEOTIDE SEQUENCE [GENOMIC DNA / MRNA] (ISOFORM 1)</scope>
    <scope>VARIANTS HSAN1A TRP-133; TYR-133 AND ASP-144</scope>
</reference>
<reference key="3">
    <citation type="journal article" date="2004" name="Nat. Genet.">
        <title>Complete sequencing and characterization of 21,243 full-length human cDNAs.</title>
        <authorList>
            <person name="Ota T."/>
            <person name="Suzuki Y."/>
            <person name="Nishikawa T."/>
            <person name="Otsuki T."/>
            <person name="Sugiyama T."/>
            <person name="Irie R."/>
            <person name="Wakamatsu A."/>
            <person name="Hayashi K."/>
            <person name="Sato H."/>
            <person name="Nagai K."/>
            <person name="Kimura K."/>
            <person name="Makita H."/>
            <person name="Sekine M."/>
            <person name="Obayashi M."/>
            <person name="Nishi T."/>
            <person name="Shibahara T."/>
            <person name="Tanaka T."/>
            <person name="Ishii S."/>
            <person name="Yamamoto J."/>
            <person name="Saito K."/>
            <person name="Kawai Y."/>
            <person name="Isono Y."/>
            <person name="Nakamura Y."/>
            <person name="Nagahari K."/>
            <person name="Murakami K."/>
            <person name="Yasuda T."/>
            <person name="Iwayanagi T."/>
            <person name="Wagatsuma M."/>
            <person name="Shiratori A."/>
            <person name="Sudo H."/>
            <person name="Hosoiri T."/>
            <person name="Kaku Y."/>
            <person name="Kodaira H."/>
            <person name="Kondo H."/>
            <person name="Sugawara M."/>
            <person name="Takahashi M."/>
            <person name="Kanda K."/>
            <person name="Yokoi T."/>
            <person name="Furuya T."/>
            <person name="Kikkawa E."/>
            <person name="Omura Y."/>
            <person name="Abe K."/>
            <person name="Kamihara K."/>
            <person name="Katsuta N."/>
            <person name="Sato K."/>
            <person name="Tanikawa M."/>
            <person name="Yamazaki M."/>
            <person name="Ninomiya K."/>
            <person name="Ishibashi T."/>
            <person name="Yamashita H."/>
            <person name="Murakawa K."/>
            <person name="Fujimori K."/>
            <person name="Tanai H."/>
            <person name="Kimata M."/>
            <person name="Watanabe M."/>
            <person name="Hiraoka S."/>
            <person name="Chiba Y."/>
            <person name="Ishida S."/>
            <person name="Ono Y."/>
            <person name="Takiguchi S."/>
            <person name="Watanabe S."/>
            <person name="Yosida M."/>
            <person name="Hotuta T."/>
            <person name="Kusano J."/>
            <person name="Kanehori K."/>
            <person name="Takahashi-Fujii A."/>
            <person name="Hara H."/>
            <person name="Tanase T.-O."/>
            <person name="Nomura Y."/>
            <person name="Togiya S."/>
            <person name="Komai F."/>
            <person name="Hara R."/>
            <person name="Takeuchi K."/>
            <person name="Arita M."/>
            <person name="Imose N."/>
            <person name="Musashino K."/>
            <person name="Yuuki H."/>
            <person name="Oshima A."/>
            <person name="Sasaki N."/>
            <person name="Aotsuka S."/>
            <person name="Yoshikawa Y."/>
            <person name="Matsunawa H."/>
            <person name="Ichihara T."/>
            <person name="Shiohata N."/>
            <person name="Sano S."/>
            <person name="Moriya S."/>
            <person name="Momiyama H."/>
            <person name="Satoh N."/>
            <person name="Takami S."/>
            <person name="Terashima Y."/>
            <person name="Suzuki O."/>
            <person name="Nakagawa S."/>
            <person name="Senoh A."/>
            <person name="Mizoguchi H."/>
            <person name="Goto Y."/>
            <person name="Shimizu F."/>
            <person name="Wakebe H."/>
            <person name="Hishigaki H."/>
            <person name="Watanabe T."/>
            <person name="Sugiyama A."/>
            <person name="Takemoto M."/>
            <person name="Kawakami B."/>
            <person name="Yamazaki M."/>
            <person name="Watanabe K."/>
            <person name="Kumagai A."/>
            <person name="Itakura S."/>
            <person name="Fukuzumi Y."/>
            <person name="Fujimori Y."/>
            <person name="Komiyama M."/>
            <person name="Tashiro H."/>
            <person name="Tanigami A."/>
            <person name="Fujiwara T."/>
            <person name="Ono T."/>
            <person name="Yamada K."/>
            <person name="Fujii Y."/>
            <person name="Ozaki K."/>
            <person name="Hirao M."/>
            <person name="Ohmori Y."/>
            <person name="Kawabata A."/>
            <person name="Hikiji T."/>
            <person name="Kobatake N."/>
            <person name="Inagaki H."/>
            <person name="Ikema Y."/>
            <person name="Okamoto S."/>
            <person name="Okitani R."/>
            <person name="Kawakami T."/>
            <person name="Noguchi S."/>
            <person name="Itoh T."/>
            <person name="Shigeta K."/>
            <person name="Senba T."/>
            <person name="Matsumura K."/>
            <person name="Nakajima Y."/>
            <person name="Mizuno T."/>
            <person name="Morinaga M."/>
            <person name="Sasaki M."/>
            <person name="Togashi T."/>
            <person name="Oyama M."/>
            <person name="Hata H."/>
            <person name="Watanabe M."/>
            <person name="Komatsu T."/>
            <person name="Mizushima-Sugano J."/>
            <person name="Satoh T."/>
            <person name="Shirai Y."/>
            <person name="Takahashi Y."/>
            <person name="Nakagawa K."/>
            <person name="Okumura K."/>
            <person name="Nagase T."/>
            <person name="Nomura N."/>
            <person name="Kikuchi H."/>
            <person name="Masuho Y."/>
            <person name="Yamashita R."/>
            <person name="Nakai K."/>
            <person name="Yada T."/>
            <person name="Nakamura Y."/>
            <person name="Ohara O."/>
            <person name="Isogai T."/>
            <person name="Sugano S."/>
        </authorList>
    </citation>
    <scope>NUCLEOTIDE SEQUENCE [LARGE SCALE MRNA] (ISOFORM 1)</scope>
    <source>
        <tissue>Placenta</tissue>
    </source>
</reference>
<reference key="4">
    <citation type="journal article" date="2004" name="Nature">
        <title>DNA sequence and analysis of human chromosome 9.</title>
        <authorList>
            <person name="Humphray S.J."/>
            <person name="Oliver K."/>
            <person name="Hunt A.R."/>
            <person name="Plumb R.W."/>
            <person name="Loveland J.E."/>
            <person name="Howe K.L."/>
            <person name="Andrews T.D."/>
            <person name="Searle S."/>
            <person name="Hunt S.E."/>
            <person name="Scott C.E."/>
            <person name="Jones M.C."/>
            <person name="Ainscough R."/>
            <person name="Almeida J.P."/>
            <person name="Ambrose K.D."/>
            <person name="Ashwell R.I.S."/>
            <person name="Babbage A.K."/>
            <person name="Babbage S."/>
            <person name="Bagguley C.L."/>
            <person name="Bailey J."/>
            <person name="Banerjee R."/>
            <person name="Barker D.J."/>
            <person name="Barlow K.F."/>
            <person name="Bates K."/>
            <person name="Beasley H."/>
            <person name="Beasley O."/>
            <person name="Bird C.P."/>
            <person name="Bray-Allen S."/>
            <person name="Brown A.J."/>
            <person name="Brown J.Y."/>
            <person name="Burford D."/>
            <person name="Burrill W."/>
            <person name="Burton J."/>
            <person name="Carder C."/>
            <person name="Carter N.P."/>
            <person name="Chapman J.C."/>
            <person name="Chen Y."/>
            <person name="Clarke G."/>
            <person name="Clark S.Y."/>
            <person name="Clee C.M."/>
            <person name="Clegg S."/>
            <person name="Collier R.E."/>
            <person name="Corby N."/>
            <person name="Crosier M."/>
            <person name="Cummings A.T."/>
            <person name="Davies J."/>
            <person name="Dhami P."/>
            <person name="Dunn M."/>
            <person name="Dutta I."/>
            <person name="Dyer L.W."/>
            <person name="Earthrowl M.E."/>
            <person name="Faulkner L."/>
            <person name="Fleming C.J."/>
            <person name="Frankish A."/>
            <person name="Frankland J.A."/>
            <person name="French L."/>
            <person name="Fricker D.G."/>
            <person name="Garner P."/>
            <person name="Garnett J."/>
            <person name="Ghori J."/>
            <person name="Gilbert J.G.R."/>
            <person name="Glison C."/>
            <person name="Grafham D.V."/>
            <person name="Gribble S."/>
            <person name="Griffiths C."/>
            <person name="Griffiths-Jones S."/>
            <person name="Grocock R."/>
            <person name="Guy J."/>
            <person name="Hall R.E."/>
            <person name="Hammond S."/>
            <person name="Harley J.L."/>
            <person name="Harrison E.S.I."/>
            <person name="Hart E.A."/>
            <person name="Heath P.D."/>
            <person name="Henderson C.D."/>
            <person name="Hopkins B.L."/>
            <person name="Howard P.J."/>
            <person name="Howden P.J."/>
            <person name="Huckle E."/>
            <person name="Johnson C."/>
            <person name="Johnson D."/>
            <person name="Joy A.A."/>
            <person name="Kay M."/>
            <person name="Keenan S."/>
            <person name="Kershaw J.K."/>
            <person name="Kimberley A.M."/>
            <person name="King A."/>
            <person name="Knights A."/>
            <person name="Laird G.K."/>
            <person name="Langford C."/>
            <person name="Lawlor S."/>
            <person name="Leongamornlert D.A."/>
            <person name="Leversha M."/>
            <person name="Lloyd C."/>
            <person name="Lloyd D.M."/>
            <person name="Lovell J."/>
            <person name="Martin S."/>
            <person name="Mashreghi-Mohammadi M."/>
            <person name="Matthews L."/>
            <person name="McLaren S."/>
            <person name="McLay K.E."/>
            <person name="McMurray A."/>
            <person name="Milne S."/>
            <person name="Nickerson T."/>
            <person name="Nisbett J."/>
            <person name="Nordsiek G."/>
            <person name="Pearce A.V."/>
            <person name="Peck A.I."/>
            <person name="Porter K.M."/>
            <person name="Pandian R."/>
            <person name="Pelan S."/>
            <person name="Phillimore B."/>
            <person name="Povey S."/>
            <person name="Ramsey Y."/>
            <person name="Rand V."/>
            <person name="Scharfe M."/>
            <person name="Sehra H.K."/>
            <person name="Shownkeen R."/>
            <person name="Sims S.K."/>
            <person name="Skuce C.D."/>
            <person name="Smith M."/>
            <person name="Steward C.A."/>
            <person name="Swarbreck D."/>
            <person name="Sycamore N."/>
            <person name="Tester J."/>
            <person name="Thorpe A."/>
            <person name="Tracey A."/>
            <person name="Tromans A."/>
            <person name="Thomas D.W."/>
            <person name="Wall M."/>
            <person name="Wallis J.M."/>
            <person name="West A.P."/>
            <person name="Whitehead S.L."/>
            <person name="Willey D.L."/>
            <person name="Williams S.A."/>
            <person name="Wilming L."/>
            <person name="Wray P.W."/>
            <person name="Young L."/>
            <person name="Ashurst J.L."/>
            <person name="Coulson A."/>
            <person name="Blocker H."/>
            <person name="Durbin R.M."/>
            <person name="Sulston J.E."/>
            <person name="Hubbard T."/>
            <person name="Jackson M.J."/>
            <person name="Bentley D.R."/>
            <person name="Beck S."/>
            <person name="Rogers J."/>
            <person name="Dunham I."/>
        </authorList>
    </citation>
    <scope>NUCLEOTIDE SEQUENCE [LARGE SCALE GENOMIC DNA]</scope>
</reference>
<reference key="5">
    <citation type="submission" date="2005-07" db="EMBL/GenBank/DDBJ databases">
        <authorList>
            <person name="Mural R.J."/>
            <person name="Istrail S."/>
            <person name="Sutton G.G."/>
            <person name="Florea L."/>
            <person name="Halpern A.L."/>
            <person name="Mobarry C.M."/>
            <person name="Lippert R."/>
            <person name="Walenz B."/>
            <person name="Shatkay H."/>
            <person name="Dew I."/>
            <person name="Miller J.R."/>
            <person name="Flanigan M.J."/>
            <person name="Edwards N.J."/>
            <person name="Bolanos R."/>
            <person name="Fasulo D."/>
            <person name="Halldorsson B.V."/>
            <person name="Hannenhalli S."/>
            <person name="Turner R."/>
            <person name="Yooseph S."/>
            <person name="Lu F."/>
            <person name="Nusskern D.R."/>
            <person name="Shue B.C."/>
            <person name="Zheng X.H."/>
            <person name="Zhong F."/>
            <person name="Delcher A.L."/>
            <person name="Huson D.H."/>
            <person name="Kravitz S.A."/>
            <person name="Mouchard L."/>
            <person name="Reinert K."/>
            <person name="Remington K.A."/>
            <person name="Clark A.G."/>
            <person name="Waterman M.S."/>
            <person name="Eichler E.E."/>
            <person name="Adams M.D."/>
            <person name="Hunkapiller M.W."/>
            <person name="Myers E.W."/>
            <person name="Venter J.C."/>
        </authorList>
    </citation>
    <scope>NUCLEOTIDE SEQUENCE [LARGE SCALE GENOMIC DNA]</scope>
</reference>
<reference key="6">
    <citation type="journal article" date="2004" name="Genome Res.">
        <title>The status, quality, and expansion of the NIH full-length cDNA project: the Mammalian Gene Collection (MGC).</title>
        <authorList>
            <consortium name="The MGC Project Team"/>
        </authorList>
    </citation>
    <scope>NUCLEOTIDE SEQUENCE [LARGE SCALE MRNA] (ISOFORM 2)</scope>
    <source>
        <tissue>Brain</tissue>
    </source>
</reference>
<reference key="7">
    <citation type="journal article" date="2006" name="J. Biol. Chem.">
        <title>Cloning and initial characterization of a new subunit for mammalian serine-palmitoyltransferase.</title>
        <authorList>
            <person name="Hornemann T."/>
            <person name="Richard S."/>
            <person name="Ruetti M.F."/>
            <person name="Wei Y."/>
            <person name="von Eckardstein A."/>
        </authorList>
    </citation>
    <scope>TISSUE SPECIFICITY</scope>
</reference>
<reference key="8">
    <citation type="journal article" date="2009" name="J. Biol. Chem.">
        <title>The SPTLC3 subunit of serine palmitoyltransferase generates short chain sphingoid bases.</title>
        <authorList>
            <person name="Hornemann T."/>
            <person name="Penno A."/>
            <person name="Ruetti M.F."/>
            <person name="Ernst D."/>
            <person name="Kivrak-Pfiffner F."/>
            <person name="Rohrer L."/>
            <person name="von Eckardstein A."/>
        </authorList>
    </citation>
    <scope>FUNCTION</scope>
</reference>
<reference key="9">
    <citation type="journal article" date="2009" name="Proc. Natl. Acad. Sci. U.S.A.">
        <title>Identification of small subunits of mammalian serine palmitoyltransferase that confer distinct acyl-CoA substrate specificities.</title>
        <authorList>
            <person name="Han G."/>
            <person name="Gupta S.D."/>
            <person name="Gable K."/>
            <person name="Niranjanakumari S."/>
            <person name="Moitra P."/>
            <person name="Eichler F."/>
            <person name="Brown R.H. Jr."/>
            <person name="Harmon J.M."/>
            <person name="Dunn T.M."/>
        </authorList>
    </citation>
    <scope>FUNCTION</scope>
    <scope>CATALYTIC ACTIVITY</scope>
    <scope>IDENTIFICATION IN THE SPT COMPLEX</scope>
    <scope>INTERACTION WITH SPTSSA AND SPTSSB</scope>
</reference>
<reference key="10">
    <citation type="journal article" date="2010" name="J. Biol. Chem.">
        <title>A disease-causing mutation in the active site of serine palmitoyltransferase causes catalytic promiscuity.</title>
        <authorList>
            <person name="Gable K."/>
            <person name="Gupta S.D."/>
            <person name="Han G."/>
            <person name="Niranjanakumari S."/>
            <person name="Harmon J.M."/>
            <person name="Dunn T.M."/>
        </authorList>
    </citation>
    <scope>BIOPHYSICOCHEMICAL PROPERTIES</scope>
    <scope>CHARACTERIZATION OF VARIANT HSAN1A TRP-133</scope>
</reference>
<reference key="11">
    <citation type="journal article" date="2010" name="Nature">
        <title>Orm family proteins mediate sphingolipid homeostasis.</title>
        <authorList>
            <person name="Breslow D.K."/>
            <person name="Collins S.R."/>
            <person name="Bodenmiller B."/>
            <person name="Aebersold R."/>
            <person name="Simons K."/>
            <person name="Shevchenko A."/>
            <person name="Ejsing C.S."/>
            <person name="Weissman J.S."/>
        </authorList>
    </citation>
    <scope>INTERACTION WITH ORMDL3</scope>
</reference>
<reference key="12">
    <citation type="journal article" date="2011" name="BMC Syst. Biol.">
        <title>Initial characterization of the human central proteome.</title>
        <authorList>
            <person name="Burkard T.R."/>
            <person name="Planyavsky M."/>
            <person name="Kaupe I."/>
            <person name="Breitwieser F.P."/>
            <person name="Buerckstuemmer T."/>
            <person name="Bennett K.L."/>
            <person name="Superti-Furga G."/>
            <person name="Colinge J."/>
        </authorList>
    </citation>
    <scope>IDENTIFICATION BY MASS SPECTROMETRY [LARGE SCALE ANALYSIS]</scope>
</reference>
<reference key="13">
    <citation type="journal article" date="2011" name="J. Neurosci.">
        <title>MicroRNA-137/181c regulates serine palmitoyltransferase and in turn amyloid beta, novel targets in sporadic Alzheimer's disease.</title>
        <authorList>
            <person name="Geekiyanage H."/>
            <person name="Chan C."/>
        </authorList>
    </citation>
    <scope>INDUCTION IN ALZHEIMER DISEASE</scope>
</reference>
<reference key="14">
    <citation type="journal article" date="2013" name="J. Biol. Chem.">
        <title>Phosphorylation of serine palmitoyltransferase long chain-1 (SPTLC1) on tyrosine 164 inhibits its activity and promotes cell survival.</title>
        <authorList>
            <person name="Taouji S."/>
            <person name="Higa A."/>
            <person name="Delom F."/>
            <person name="Palcy S."/>
            <person name="Mahon F.X."/>
            <person name="Pasquet J.M."/>
            <person name="Bosse R."/>
            <person name="Segui B."/>
            <person name="Chevet E."/>
        </authorList>
    </citation>
    <scope>PHOSPHORYLATION AT TYR-164</scope>
    <scope>MUTAGENESIS OF TYR-164</scope>
</reference>
<reference key="15">
    <citation type="journal article" date="2015" name="Proteomics">
        <title>N-terminome analysis of the human mitochondrial proteome.</title>
        <authorList>
            <person name="Vaca Jacome A.S."/>
            <person name="Rabilloud T."/>
            <person name="Schaeffer-Reiss C."/>
            <person name="Rompais M."/>
            <person name="Ayoub D."/>
            <person name="Lane L."/>
            <person name="Bairoch A."/>
            <person name="Van Dorsselaer A."/>
            <person name="Carapito C."/>
        </authorList>
    </citation>
    <scope>IDENTIFICATION BY MASS SPECTROMETRY [LARGE SCALE ANALYSIS]</scope>
</reference>
<reference key="16">
    <citation type="journal article" date="2019" name="J. Biol. Chem.">
        <title>The ORMDL/Orm-serine palmitoyltransferase (SPT) complex is directly regulated by ceramide: Reconstitution of SPT regulation in isolated membranes.</title>
        <authorList>
            <person name="Davis D.L."/>
            <person name="Gable K."/>
            <person name="Suemitsu J."/>
            <person name="Dunn T.M."/>
            <person name="Wattenberg B.W."/>
        </authorList>
    </citation>
    <scope>REGULATION OF SPT COMPLEX ACTIVITY BY ORMDL PROTEINS IN THE PRESENCE OF CERAMIDES</scope>
</reference>
<reference key="17">
    <citation type="journal article" date="2022" name="Cell Rep.">
        <title>De novo sphingolipid biosynthesis necessitates detoxification in cancer cells.</title>
        <authorList>
            <person name="Spears M.E."/>
            <person name="Lee N."/>
            <person name="Hwang S."/>
            <person name="Park S.J."/>
            <person name="Carlisle A.E."/>
            <person name="Li R."/>
            <person name="Doshi M.B."/>
            <person name="Armando A.M."/>
            <person name="Gao J."/>
            <person name="Simin K."/>
            <person name="Zhu L.J."/>
            <person name="Greer P.L."/>
            <person name="Quehenberger O."/>
            <person name="Torres E.M."/>
            <person name="Kim D."/>
        </authorList>
    </citation>
    <scope>FUNCTION</scope>
</reference>
<reference evidence="37 38 39 40 41 42 43 44 45" key="18">
    <citation type="journal article" date="2021" name="Nat. Struct. Mol. Biol.">
        <title>Structural insights into the regulation of human serine palmitoyltransferase complexes.</title>
        <authorList>
            <person name="Wang Y."/>
            <person name="Niu Y."/>
            <person name="Zhang Z."/>
            <person name="Gable K."/>
            <person name="Gupta S.D."/>
            <person name="Somashekarappa N."/>
            <person name="Han G."/>
            <person name="Zhao H."/>
            <person name="Myasnikov A.G."/>
            <person name="Kalathur R.C."/>
            <person name="Dunn T.M."/>
            <person name="Lee C.H."/>
        </authorList>
    </citation>
    <scope>STRUCTURE BY ELECTRON MICROSCOPY (2.60 ANGSTROMS) IN COMPLEX WITH SPTLC2; SPTSSA AND ORMDL3</scope>
    <scope>BIOPHYSICOCHEMICAL PROPERTIES</scope>
</reference>
<reference evidence="33 34 35 36" key="19">
    <citation type="journal article" date="2021" name="Nat. Struct. Mol. Biol.">
        <title>Structural insights into the assembly and substrate selectivity of human SPT-ORMDL3 complex.</title>
        <authorList>
            <person name="Li S."/>
            <person name="Xie T."/>
            <person name="Liu P."/>
            <person name="Wang L."/>
            <person name="Gong X."/>
        </authorList>
    </citation>
    <scope>STRUCTURE BY ELECTRON MICROSCOPY (3.20 ANGSTROMS) IN COMPLEX WITH SPTLC2; SPTSSA AND ORMDL3</scope>
    <scope>FUNCTION</scope>
    <scope>MUTAGENESIS OF PHE-138; PHE-337 AND SER-338</scope>
</reference>
<reference evidence="46 47 48 49" key="20">
    <citation type="journal article" date="2023" name="Nat. Commun.">
        <title>Ceramide sensing by human SPT-ORMDL complex for establishing sphingolipid homeostasis.</title>
        <authorList>
            <person name="Xie T."/>
            <person name="Liu P."/>
            <person name="Wu X."/>
            <person name="Dong F."/>
            <person name="Zhang Z."/>
            <person name="Yue J."/>
            <person name="Mahawar U."/>
            <person name="Farooq F."/>
            <person name="Vohra H."/>
            <person name="Fang Q."/>
            <person name="Liu W."/>
            <person name="Wattenberg B.W."/>
            <person name="Gong X."/>
        </authorList>
    </citation>
    <scope>STRUCTURE BY ELECTRON MICROSCOPY (2.70 ANGSTROMS) IN COMPLEX WITH SPTLC2; SPTSSA AND ORMDL3</scope>
    <scope>CHARACTERIZATION OF VARIANTS ALS27 PHE-23; LEU-39 DEL AND 40-PHE-SER-41 DEL</scope>
    <scope>ACTIVITY REGULATION</scope>
</reference>
<reference key="21">
    <citation type="journal article" date="2004" name="Neurology">
        <title>SPTLC1 mutation in twin sisters with hereditary sensory neuropathy type I.</title>
        <authorList>
            <person name="Verhoeven K."/>
            <person name="Coen K."/>
            <person name="De Vriendt E."/>
            <person name="Jacobs A."/>
            <person name="Van Gerwen V."/>
            <person name="Smouts I."/>
            <person name="Pou-Serradell A."/>
            <person name="Martin J.-J."/>
            <person name="Timmerman V."/>
            <person name="De Jonghe P."/>
        </authorList>
    </citation>
    <scope>VARIANT ALA-387</scope>
</reference>
<reference key="22">
    <citation type="journal article" date="2006" name="Neurology">
        <title>Charcot-Marie-Tooth disease due to a de novo mutation of the RAB7 gene.</title>
        <authorList>
            <person name="Meggouh F."/>
            <person name="Bienfait H.M.E."/>
            <person name="Weterman M.A.J."/>
            <person name="de Visser M."/>
            <person name="Baas F."/>
        </authorList>
    </citation>
    <scope>VARIANT LEU-151</scope>
</reference>
<reference key="23">
    <citation type="journal article" date="2006" name="Science">
        <title>The consensus coding sequences of human breast and colorectal cancers.</title>
        <authorList>
            <person name="Sjoeblom T."/>
            <person name="Jones S."/>
            <person name="Wood L.D."/>
            <person name="Parsons D.W."/>
            <person name="Lin J."/>
            <person name="Barber T.D."/>
            <person name="Mandelker D."/>
            <person name="Leary R.J."/>
            <person name="Ptak J."/>
            <person name="Silliman N."/>
            <person name="Szabo S."/>
            <person name="Buckhaults P."/>
            <person name="Farrell C."/>
            <person name="Meeh P."/>
            <person name="Markowitz S.D."/>
            <person name="Willis J."/>
            <person name="Dawson D."/>
            <person name="Willson J.K.V."/>
            <person name="Gazdar A.F."/>
            <person name="Hartigan J."/>
            <person name="Wu L."/>
            <person name="Liu C."/>
            <person name="Parmigiani G."/>
            <person name="Park B.H."/>
            <person name="Bachman K.E."/>
            <person name="Papadopoulos N."/>
            <person name="Vogelstein B."/>
            <person name="Kinzler K.W."/>
            <person name="Velculescu V.E."/>
        </authorList>
    </citation>
    <scope>VARIANT [LARGE SCALE ANALYSIS] TRP-239</scope>
</reference>
<reference key="24">
    <citation type="journal article" date="2009" name="Brain">
        <title>Genes for hereditary sensory and autonomic neuropathies: a genotype-phenotype correlation.</title>
        <authorList>
            <person name="Rotthier A."/>
            <person name="Baets J."/>
            <person name="De Vriendt E."/>
            <person name="Jacobs A."/>
            <person name="Auer-Grumbach M."/>
            <person name="Levy N."/>
            <person name="Bonello-Palot N."/>
            <person name="Kilic S.S."/>
            <person name="Weis J."/>
            <person name="Nascimento A."/>
            <person name="Swinkels M."/>
            <person name="Kruyt M.C."/>
            <person name="Jordanova A."/>
            <person name="De Jonghe P."/>
            <person name="Timmerman V."/>
        </authorList>
    </citation>
    <scope>VARIANTS HSAN1A PHE-331 AND VAL-352</scope>
    <scope>VARIANT ALA-387</scope>
</reference>
<reference key="25">
    <citation type="journal article" date="2009" name="Neurogenetics">
        <title>A systematic comparison of all mutations in hereditary sensory neuropathy type I (HSAN I) reveals that the G387A mutation is not disease associated.</title>
        <authorList>
            <person name="Hornemann T."/>
            <person name="Penno A."/>
            <person name="Richard S."/>
            <person name="Nicholson G."/>
            <person name="van Dijk F.S."/>
            <person name="Rotthier A."/>
            <person name="Timmerman V."/>
            <person name="von Eckardstein A."/>
        </authorList>
    </citation>
    <scope>CHARACTERIZATION OF VARIANTS HSAN1A TYR-133; TRP-133 AND ASP-144</scope>
    <scope>CHARACTERIZATION OF VARIANT ALA-387</scope>
    <scope>LACK OF ASSOCIATION OF VARIANT ALA-387 WITH HSAN1A</scope>
    <scope>INTERACTION WITH SPTLC2</scope>
</reference>
<reference key="26">
    <citation type="journal article" date="2011" name="Hum. Mutat.">
        <title>Characterization of two mutations in the SPTLC1 subunit of serine palmitoyltransferase associated with hereditary sensory and autonomic neuropathy type I.</title>
        <authorList>
            <person name="Rotthier A."/>
            <person name="Penno A."/>
            <person name="Rautenstrauss B."/>
            <person name="Auer-Grumbach M."/>
            <person name="Stettner G.M."/>
            <person name="Asselbergh B."/>
            <person name="Van Hoof K."/>
            <person name="Sticht H."/>
            <person name="Levy N."/>
            <person name="Timmerman V."/>
            <person name="Hornemann T."/>
            <person name="Janssens K."/>
        </authorList>
    </citation>
    <scope>VARIANT HSAN1A PHE-331</scope>
    <scope>CHARACTERIZATION OF VARIANTS HSAN1A TRP-133; PHE-331 AND VAL-352</scope>
    <scope>SUBCELLULAR LOCATION</scope>
</reference>
<reference key="27">
    <citation type="journal article" date="2012" name="J. Neurol.">
        <title>Frequency of mutations in the genes associated with hereditary sensory and autonomic neuropathy in a UK cohort.</title>
        <authorList>
            <person name="Davidson G.L."/>
            <person name="Murphy S.M."/>
            <person name="Polke J.M."/>
            <person name="Laura M."/>
            <person name="Salih M.A."/>
            <person name="Muntoni F."/>
            <person name="Blake J."/>
            <person name="Brandner S."/>
            <person name="Davies N."/>
            <person name="Horvath R."/>
            <person name="Price S."/>
            <person name="Donaghy M."/>
            <person name="Roberts M."/>
            <person name="Foulds N."/>
            <person name="Ramdharry G."/>
            <person name="Soler D."/>
            <person name="Lunn M.P."/>
            <person name="Manji H."/>
            <person name="Davis M.B."/>
            <person name="Houlden H."/>
            <person name="Reilly M.M."/>
        </authorList>
    </citation>
    <scope>VARIANT HSAN1A TRP-133</scope>
    <scope>VARIANT GLY-310</scope>
</reference>
<reference key="28">
    <citation type="journal article" date="2013" name="Eur. J. Med. Genet.">
        <title>Mutations at Ser331 in the HSN type I gene SPTLC1 are associated with a distinct syndromic phenotype.</title>
        <authorList>
            <person name="Auer-Grumbach M."/>
            <person name="Bode H."/>
            <person name="Pieber T.R."/>
            <person name="Schabhuettl M."/>
            <person name="Fischer D."/>
            <person name="Seidl R."/>
            <person name="Graf E."/>
            <person name="Wieland T."/>
            <person name="Schuh R."/>
            <person name="Vacariu G."/>
            <person name="Grill F."/>
            <person name="Timmerman V."/>
            <person name="Strom T.M."/>
            <person name="Hornemann T."/>
        </authorList>
    </citation>
    <scope>INVOLVEMENT IN HSAN1A</scope>
    <scope>VARIANT HSAN1A TYR-331</scope>
    <scope>CHARACTERIZATION OF VARIANT HSAN1A TYR-331</scope>
</reference>
<reference key="29">
    <citation type="journal article" date="2014" name="Mol. Med. Report.">
        <title>Early-onset severe hereditary sensory and autonomic neuropathy type 1 with S331F SPTLC1 mutation.</title>
        <authorList>
            <person name="Suh B.C."/>
            <person name="Hong Y.B."/>
            <person name="Nakhro K."/>
            <person name="Nam S.H."/>
            <person name="Chung K.W."/>
            <person name="Choi B.O."/>
        </authorList>
    </citation>
    <scope>VARIANT HSAN1A PHE-331</scope>
</reference>
<reference key="30">
    <citation type="journal article" date="2018" name="Case Rep. Genet.">
        <title>V144D Mutation of SPTLC1 Can Present with Both Painful and Painless Phenotypes in Hereditary Sensory and Autonomic Neuropathies Type I.</title>
        <authorList>
            <person name="Ho K.W.D."/>
            <person name="Jerath N.U."/>
        </authorList>
    </citation>
    <scope>VARIANT HSAN1A ASP-144</scope>
</reference>
<reference key="31">
    <citation type="journal article" date="2021" name="JAMA Neurol.">
        <title>Association of Variants in the SPTLC1 Gene With Juvenile Amyotrophic Lateral Sclerosis.</title>
        <authorList>
            <consortium name="FALS Sequencing Consortium"/>
            <consortium name="American Genome Center"/>
            <consortium name="International ALS Genomics Consortium"/>
            <consortium name="and ITALSGEN Consortium"/>
            <person name="Johnson J.O."/>
            <person name="Chia R."/>
            <person name="Miller D.E."/>
            <person name="Li R."/>
            <person name="Kumaran R."/>
            <person name="Abramzon Y."/>
            <person name="Alahmady N."/>
            <person name="Renton A.E."/>
            <person name="Topp S.D."/>
            <person name="Gibbs J.R."/>
            <person name="Cookson M.R."/>
            <person name="Sabir M.S."/>
            <person name="Dalgard C.L."/>
            <person name="Troakes C."/>
            <person name="Jones A.R."/>
            <person name="Shatunov A."/>
            <person name="Iacoangeli A."/>
            <person name="Al Khleifat A."/>
            <person name="Ticozzi N."/>
            <person name="Silani V."/>
            <person name="Gellera C."/>
            <person name="Blair I.P."/>
            <person name="Dobson-Stone C."/>
            <person name="Kwok J.B."/>
            <person name="Bonkowski E.S."/>
            <person name="Palvadeau R."/>
            <person name="Tienari P.J."/>
            <person name="Morrison K.E."/>
            <person name="Shaw P.J."/>
            <person name="Al-Chalabi A."/>
            <person name="Brown R.H. Jr."/>
            <person name="Calvo A."/>
            <person name="Mora G."/>
            <person name="Al-Saif H."/>
            <person name="Gotkine M."/>
            <person name="Leigh F."/>
            <person name="Chang I.J."/>
            <person name="Perlman S.J."/>
            <person name="Glass I."/>
            <person name="Scott A.I."/>
            <person name="Shaw C.E."/>
            <person name="Basak A.N."/>
            <person name="Landers J.E."/>
            <person name="Chio A."/>
            <person name="Crawford T.O."/>
            <person name="Smith B.N."/>
            <person name="Traynor B.J."/>
            <person name="Smith B.N."/>
            <person name="Ticozzi N."/>
            <person name="Fallini C."/>
            <person name="Gkazi A.S."/>
            <person name="Topp S.D."/>
            <person name="Scotter E.L."/>
            <person name="Kenna K.P."/>
            <person name="Keagle P."/>
            <person name="Tiloca C."/>
            <person name="Vance C."/>
            <person name="Troakes C."/>
            <person name="Colombrita C."/>
            <person name="King A."/>
            <person name="Pensato V."/>
            <person name="Castellotti B."/>
            <person name="Baas F."/>
            <person name="Ten Asbroek A.L.M.A."/>
            <person name="McKenna-Yasek D."/>
            <person name="McLaughlin R.L."/>
            <person name="Polak M."/>
            <person name="Asress S."/>
            <person name="Esteban-Perez J."/>
            <person name="Stevic Z."/>
            <person name="D'Alfonso S."/>
            <person name="Mazzini L."/>
            <person name="Comi G.P."/>
            <person name="Del Bo R."/>
            <person name="Ceroni M."/>
            <person name="Gagliardi S."/>
            <person name="Querin G."/>
            <person name="Bertolin C."/>
            <person name="van Rheenen W."/>
            <person name="Rademakers R."/>
            <person name="van Blitterswijk M."/>
            <person name="Lauria G."/>
            <person name="Duga S."/>
            <person name="Corti S."/>
            <person name="Cereda C."/>
            <person name="Corrado L."/>
            <person name="Soraru G."/>
            <person name="Williams K.L."/>
            <person name="Nicholson G.A."/>
            <person name="Blair I.P."/>
            <person name="Leblond-Manry C."/>
            <person name="Rouleau G.A."/>
            <person name="Hardiman O."/>
            <person name="Morrison K.E."/>
            <person name="Veldink J.H."/>
            <person name="van den Berg L.H."/>
            <person name="Al-Chalabi A."/>
            <person name="Pall H."/>
            <person name="Shaw P.J."/>
            <person name="Turner M.R."/>
            <person name="Talbot K."/>
            <person name="Taroni F."/>
            <person name="Garcia-Redondo A."/>
            <person name="Wu Z."/>
            <person name="Glass J.D."/>
            <person name="Gellera C."/>
            <person name="Ratti A."/>
            <person name="Brown R.H. Jr."/>
            <person name="Silani V."/>
            <person name="Shaw C.E."/>
            <person name="Landers J.E."/>
            <person name="Dalgard C.L."/>
            <person name="Adeleye A."/>
            <person name="Soltis A.R."/>
            <person name="Alba C."/>
            <person name="Viollet C."/>
            <person name="Bacikova D."/>
            <person name="Hupalo D.N."/>
            <person name="Sukumar G."/>
            <person name="Pollard H.B."/>
            <person name="Wilkerson M.D."/>
            <person name="Martinez E.M."/>
            <person name="Abramzon Y."/>
            <person name="Ahmed S."/>
            <person name="Arepalli S."/>
            <person name="Baloh R.H."/>
            <person name="Bowser R."/>
            <person name="Brady C.B."/>
            <person name="Brice A."/>
            <person name="Broach J."/>
            <person name="Campbell R.H."/>
            <person name="Camu W."/>
            <person name="Chia R."/>
            <person name="Cooper-Knock J."/>
            <person name="Ding J."/>
            <person name="Drepper C."/>
            <person name="Drory V.E."/>
            <person name="Dunckley T.L."/>
            <person name="Eicher J.D."/>
            <person name="England B.K."/>
            <person name="Faghri F."/>
            <person name="Feldman E."/>
            <person name="Floeter M.K."/>
            <person name="Fratta P."/>
            <person name="Geiger J.T."/>
            <person name="Gerhard G."/>
            <person name="Gibbs J.R."/>
            <person name="Gibson S.B."/>
            <person name="Glass J.D."/>
            <person name="Hardy J."/>
            <person name="Harms M.B."/>
            <person name="Heiman-Patterson T.D."/>
            <person name="Hernandez D.G."/>
            <person name="Jansson L."/>
            <person name="Kirby J."/>
            <person name="Kowall N.W."/>
            <person name="Laaksovirta H."/>
            <person name="Landeck N."/>
            <person name="Landi F."/>
            <person name="Le Ber I."/>
            <person name="Lumbroso S."/>
            <person name="MacGowan D.J.L."/>
            <person name="Maragakis N.J."/>
            <person name="Mora G."/>
            <person name="Mouzat K."/>
            <person name="Murphy N.A."/>
            <person name="Myllykangas L."/>
            <person name="Nalls M.A."/>
            <person name="Orrell R.W."/>
            <person name="Ostrow L.W."/>
            <person name="Pamphlett R."/>
            <person name="Pickering-Brown S."/>
            <person name="Pioro E.P."/>
            <person name="Pletnikova O."/>
            <person name="Pliner H.A."/>
            <person name="Pulst S.M."/>
            <person name="Ravits J.M."/>
            <person name="Renton A.E."/>
            <person name="Rivera A."/>
            <person name="Robberecht W."/>
            <person name="Rogaeva E."/>
            <person name="Rollinson S."/>
            <person name="Rothstein J.D."/>
            <person name="Scholz S.W."/>
            <person name="Sendtner M."/>
            <person name="Shaw P.J."/>
            <person name="Sidle K.C."/>
            <person name="Simmons Z."/>
            <person name="Singleton A.B."/>
            <person name="Smith N."/>
            <person name="Stone D.J."/>
            <person name="Tienari P.J."/>
            <person name="Troncoso J.C."/>
            <person name="Valori M."/>
            <person name="Van Damme P."/>
            <person name="Van Deerlin V.M."/>
            <person name="Van Den Bosch L."/>
            <person name="Zinman L."/>
            <person name="Landers J.E."/>
            <person name="Chio A."/>
            <person name="Traynor B.J."/>
            <person name="Angelocola S.M."/>
            <person name="Ausiello F.P."/>
            <person name="Barberis M."/>
            <person name="Bartolomei I."/>
            <person name="Battistini S."/>
            <person name="Bersano E."/>
            <person name="Bisogni G."/>
            <person name="Borghero G."/>
            <person name="Brunetti M."/>
            <person name="Cabona C."/>
            <person name="Calvo A."/>
            <person name="Canale F."/>
            <person name="Canosa A."/>
            <person name="Cantisani T.A."/>
            <person name="Capasso M."/>
            <person name="Caponnetto C."/>
            <person name="Cardinali P."/>
            <person name="Carrera P."/>
            <person name="Casale F."/>
            <person name="Chio A."/>
            <person name="Colletti T."/>
            <person name="Conforti F.L."/>
            <person name="Conte A."/>
            <person name="Conti E."/>
            <person name="Corbo M."/>
            <person name="Cuccu S."/>
            <person name="Dalla Bella E."/>
            <person name="D'Errico E."/>
            <person name="DeMarco G."/>
            <person name="Dubbioso R."/>
            <person name="Ferrarese C."/>
            <person name="Ferraro P.M."/>
            <person name="Filippi M."/>
            <person name="Fini N."/>
            <person name="Floris G."/>
            <person name="Fuda G."/>
            <person name="Gallone S."/>
            <person name="Gianferrari G."/>
            <person name="Giannini F."/>
            <person name="Grassano M."/>
            <person name="Greco L."/>
            <person name="Iazzolino B."/>
            <person name="Introna A."/>
            <person name="La Bella V."/>
            <person name="Lattante S."/>
            <person name="Lauria G."/>
            <person name="Liguori R."/>
            <person name="Logroscino G."/>
            <person name="Logullo F.O."/>
            <person name="Lunetta C."/>
            <person name="Mandich P."/>
            <person name="Mandrioli J."/>
            <person name="Manera U."/>
            <person name="Manganelli F."/>
            <person name="Marangi G."/>
            <person name="Marinou K."/>
            <person name="Marrosu M.G."/>
            <person name="Martinelli I."/>
            <person name="Messina S."/>
            <person name="Moglia C."/>
            <person name="Mora G."/>
            <person name="Mosca L."/>
            <person name="Murru M.R."/>
            <person name="Origone P."/>
            <person name="Passaniti C."/>
            <person name="Petrelli C."/>
            <person name="Petrucci A."/>
            <person name="Pozzi S."/>
            <person name="Pugliatti M."/>
            <person name="Quattrini A."/>
            <person name="Ricci C."/>
            <person name="Riolo G."/>
            <person name="Riva N."/>
            <person name="Russo M."/>
            <person name="Sabatelli M."/>
            <person name="Salamone P."/>
            <person name="Salivetto M."/>
            <person name="Salvi F."/>
            <person name="Santarelli M."/>
            <person name="Sbaiz L."/>
            <person name="Sideri R."/>
            <person name="Simone I."/>
            <person name="Simonini C."/>
            <person name="Spataro R."/>
            <person name="Tanel R."/>
            <person name="Tedeschi G."/>
            <person name="Ticca A."/>
            <person name="Torriello A."/>
            <person name="Tranquilli S."/>
            <person name="Tremolizzo L."/>
            <person name="Trojsi F."/>
            <person name="Vasta R."/>
            <person name="Vacchiano V."/>
            <person name="Vita G."/>
            <person name="Volanti P."/>
            <person name="Zollino M."/>
            <person name="Zucchi E."/>
        </authorList>
    </citation>
    <scope>INVOLVEMENT IN ALS27</scope>
    <scope>VARIANTS ALS27 SER-20; LEU-39 DEL AND TYR-331</scope>
</reference>
<reference key="32">
    <citation type="journal article" date="2021" name="Nat. Med.">
        <title>Childhood amyotrophic lateral sclerosis caused by excess sphingolipid synthesis.</title>
        <authorList>
            <person name="Mohassel P."/>
            <person name="Donkervoort S."/>
            <person name="Lone M.A."/>
            <person name="Nalls M."/>
            <person name="Gable K."/>
            <person name="Gupta S.D."/>
            <person name="Foley A.R."/>
            <person name="Hu Y."/>
            <person name="Saute J.A.M."/>
            <person name="Moreira A.L."/>
            <person name="Kok F."/>
            <person name="Introna A."/>
            <person name="Logroscino G."/>
            <person name="Grunseich C."/>
            <person name="Nickolls A.R."/>
            <person name="Pourshafie N."/>
            <person name="Neuhaus S.B."/>
            <person name="Saade D."/>
            <person name="Gangfuss A."/>
            <person name="Koelbel H."/>
            <person name="Piccus Z."/>
            <person name="Le Pichon C.E."/>
            <person name="Fiorillo C."/>
            <person name="Ly C.V."/>
            <person name="Toepf A."/>
            <person name="Brady L."/>
            <person name="Specht S."/>
            <person name="Zidell A."/>
            <person name="Pedro H."/>
            <person name="Mittelmann E."/>
            <person name="Thomas F.P."/>
            <person name="Chao K.R."/>
            <person name="Konersman C.G."/>
            <person name="Cho M.T."/>
            <person name="Brandt T."/>
            <person name="Straub V."/>
            <person name="Connolly A.M."/>
            <person name="Schara U."/>
            <person name="Roos A."/>
            <person name="Tarnopolsky M."/>
            <person name="Hoeke A."/>
            <person name="Brown R.H."/>
            <person name="Lee C.H."/>
            <person name="Hornemann T."/>
            <person name="Dunn T.M."/>
            <person name="Boennemann C.G."/>
        </authorList>
    </citation>
    <scope>INVOLVEMENT IN ALS27</scope>
    <scope>VARIANTS ALS27 SER-20; PHE-23; LEU-39 DEL AND 40-PHE-SER-41 DEL</scope>
    <scope>CHARACTERIZATION OF VARIANTS ALS27 SER-20; PHE-23; LEU-39 DEL AND 40-PHE-SER-41 DEL</scope>
    <scope>HOMEOSTATIC REGULATION BY ORMDL3 IN THE PRESENCE OF CERAMIDES</scope>
</reference>
<reference key="33">
    <citation type="journal article" date="2022" name="Amyotroph. Lateral Scler. Frontotemporal Degener.">
        <title>A de novo c.113 T &gt; C: p.L38R mutation of SPTLC1: case report of a girl with sporadic juvenile amyotrophic lateral sclerosis.</title>
        <authorList>
            <person name="Liu X."/>
            <person name="He J."/>
            <person name="Yu W."/>
            <person name="Fan D."/>
        </authorList>
    </citation>
    <scope>INVOLVEMENT IN ALS27</scope>
    <scope>VARIANT ALS27 ARG-38</scope>
</reference>
<dbReference type="EC" id="2.3.1.50" evidence="10"/>
<dbReference type="EMBL" id="Y08685">
    <property type="protein sequence ID" value="CAA69941.1"/>
    <property type="molecule type" value="mRNA"/>
</dbReference>
<dbReference type="EMBL" id="AF286717">
    <property type="protein sequence ID" value="AAK29328.1"/>
    <property type="molecule type" value="Genomic_DNA"/>
</dbReference>
<dbReference type="EMBL" id="AF286703">
    <property type="protein sequence ID" value="AAK29328.1"/>
    <property type="status" value="JOINED"/>
    <property type="molecule type" value="Genomic_DNA"/>
</dbReference>
<dbReference type="EMBL" id="AF286704">
    <property type="protein sequence ID" value="AAK29328.1"/>
    <property type="status" value="JOINED"/>
    <property type="molecule type" value="Genomic_DNA"/>
</dbReference>
<dbReference type="EMBL" id="AF286705">
    <property type="protein sequence ID" value="AAK29328.1"/>
    <property type="status" value="JOINED"/>
    <property type="molecule type" value="Genomic_DNA"/>
</dbReference>
<dbReference type="EMBL" id="AF286706">
    <property type="protein sequence ID" value="AAK29328.1"/>
    <property type="status" value="JOINED"/>
    <property type="molecule type" value="Genomic_DNA"/>
</dbReference>
<dbReference type="EMBL" id="AF286707">
    <property type="protein sequence ID" value="AAK29328.1"/>
    <property type="status" value="JOINED"/>
    <property type="molecule type" value="Genomic_DNA"/>
</dbReference>
<dbReference type="EMBL" id="AF286708">
    <property type="protein sequence ID" value="AAK29328.1"/>
    <property type="status" value="JOINED"/>
    <property type="molecule type" value="Genomic_DNA"/>
</dbReference>
<dbReference type="EMBL" id="AF286709">
    <property type="protein sequence ID" value="AAK29328.1"/>
    <property type="status" value="JOINED"/>
    <property type="molecule type" value="Genomic_DNA"/>
</dbReference>
<dbReference type="EMBL" id="AF286710">
    <property type="protein sequence ID" value="AAK29328.1"/>
    <property type="status" value="JOINED"/>
    <property type="molecule type" value="Genomic_DNA"/>
</dbReference>
<dbReference type="EMBL" id="AF286711">
    <property type="protein sequence ID" value="AAK29328.1"/>
    <property type="status" value="JOINED"/>
    <property type="molecule type" value="Genomic_DNA"/>
</dbReference>
<dbReference type="EMBL" id="AF286712">
    <property type="protein sequence ID" value="AAK29328.1"/>
    <property type="status" value="JOINED"/>
    <property type="molecule type" value="Genomic_DNA"/>
</dbReference>
<dbReference type="EMBL" id="AF286713">
    <property type="protein sequence ID" value="AAK29328.1"/>
    <property type="status" value="JOINED"/>
    <property type="molecule type" value="Genomic_DNA"/>
</dbReference>
<dbReference type="EMBL" id="AF286714">
    <property type="protein sequence ID" value="AAK29328.1"/>
    <property type="status" value="JOINED"/>
    <property type="molecule type" value="Genomic_DNA"/>
</dbReference>
<dbReference type="EMBL" id="AF286715">
    <property type="protein sequence ID" value="AAK29328.1"/>
    <property type="status" value="JOINED"/>
    <property type="molecule type" value="Genomic_DNA"/>
</dbReference>
<dbReference type="EMBL" id="AF286716">
    <property type="protein sequence ID" value="AAK29328.1"/>
    <property type="status" value="JOINED"/>
    <property type="molecule type" value="Genomic_DNA"/>
</dbReference>
<dbReference type="EMBL" id="AK291546">
    <property type="protein sequence ID" value="BAF84235.1"/>
    <property type="molecule type" value="mRNA"/>
</dbReference>
<dbReference type="EMBL" id="AL391219">
    <property type="status" value="NOT_ANNOTATED_CDS"/>
    <property type="molecule type" value="Genomic_DNA"/>
</dbReference>
<dbReference type="EMBL" id="AL354751">
    <property type="status" value="NOT_ANNOTATED_CDS"/>
    <property type="molecule type" value="Genomic_DNA"/>
</dbReference>
<dbReference type="EMBL" id="CH471089">
    <property type="protein sequence ID" value="EAW62804.1"/>
    <property type="molecule type" value="Genomic_DNA"/>
</dbReference>
<dbReference type="EMBL" id="BC007085">
    <property type="protein sequence ID" value="AAH07085.1"/>
    <property type="molecule type" value="mRNA"/>
</dbReference>
<dbReference type="CCDS" id="CCDS6692.1">
    <molecule id="O15269-1"/>
</dbReference>
<dbReference type="CCDS" id="CCDS6693.1">
    <molecule id="O15269-2"/>
</dbReference>
<dbReference type="RefSeq" id="NP_001268232.1">
    <property type="nucleotide sequence ID" value="NM_001281303.1"/>
</dbReference>
<dbReference type="RefSeq" id="NP_006406.1">
    <molecule id="O15269-1"/>
    <property type="nucleotide sequence ID" value="NM_006415.4"/>
</dbReference>
<dbReference type="RefSeq" id="NP_847894.1">
    <molecule id="O15269-2"/>
    <property type="nucleotide sequence ID" value="NM_178324.3"/>
</dbReference>
<dbReference type="PDB" id="6M4N">
    <property type="method" value="EM"/>
    <property type="resolution" value="3.80 A"/>
    <property type="chains" value="A/E=1-473"/>
</dbReference>
<dbReference type="PDB" id="6M4O">
    <property type="method" value="EM"/>
    <property type="resolution" value="3.40 A"/>
    <property type="chains" value="B/S=1-473"/>
</dbReference>
<dbReference type="PDB" id="7CQI">
    <property type="method" value="EM"/>
    <property type="resolution" value="3.20 A"/>
    <property type="chains" value="C/S=1-473"/>
</dbReference>
<dbReference type="PDB" id="7CQK">
    <property type="method" value="EM"/>
    <property type="resolution" value="3.30 A"/>
    <property type="chains" value="C/S=1-473"/>
</dbReference>
<dbReference type="PDB" id="7K0I">
    <property type="method" value="EM"/>
    <property type="resolution" value="3.30 A"/>
    <property type="chains" value="A/D=1-473"/>
</dbReference>
<dbReference type="PDB" id="7K0J">
    <property type="method" value="EM"/>
    <property type="resolution" value="3.10 A"/>
    <property type="chains" value="A=1-473"/>
</dbReference>
<dbReference type="PDB" id="7K0K">
    <property type="method" value="EM"/>
    <property type="resolution" value="2.60 A"/>
    <property type="chains" value="A=1-473"/>
</dbReference>
<dbReference type="PDB" id="7K0L">
    <property type="method" value="EM"/>
    <property type="resolution" value="3.40 A"/>
    <property type="chains" value="A=1-473"/>
</dbReference>
<dbReference type="PDB" id="7K0M">
    <property type="method" value="EM"/>
    <property type="resolution" value="2.90 A"/>
    <property type="chains" value="A/E=1-473"/>
</dbReference>
<dbReference type="PDB" id="7K0N">
    <property type="method" value="EM"/>
    <property type="resolution" value="3.10 A"/>
    <property type="chains" value="A/E=1-473"/>
</dbReference>
<dbReference type="PDB" id="7K0O">
    <property type="method" value="EM"/>
    <property type="resolution" value="3.10 A"/>
    <property type="chains" value="A/E=1-473"/>
</dbReference>
<dbReference type="PDB" id="7K0P">
    <property type="method" value="EM"/>
    <property type="resolution" value="3.10 A"/>
    <property type="chains" value="A/E=1-473"/>
</dbReference>
<dbReference type="PDB" id="7K0Q">
    <property type="method" value="EM"/>
    <property type="resolution" value="3.30 A"/>
    <property type="chains" value="A=1-473"/>
</dbReference>
<dbReference type="PDB" id="7YIU">
    <property type="method" value="EM"/>
    <property type="resolution" value="2.90 A"/>
    <property type="chains" value="A/E=1-473"/>
</dbReference>
<dbReference type="PDB" id="7YIY">
    <property type="method" value="EM"/>
    <property type="resolution" value="2.70 A"/>
    <property type="chains" value="A/E=1-473"/>
</dbReference>
<dbReference type="PDB" id="7YJ1">
    <property type="method" value="EM"/>
    <property type="resolution" value="3.10 A"/>
    <property type="chains" value="A/E=1-473"/>
</dbReference>
<dbReference type="PDB" id="7YJ2">
    <property type="method" value="EM"/>
    <property type="resolution" value="2.90 A"/>
    <property type="chains" value="A/E=1-473"/>
</dbReference>
<dbReference type="PDBsum" id="6M4N"/>
<dbReference type="PDBsum" id="6M4O"/>
<dbReference type="PDBsum" id="7CQI"/>
<dbReference type="PDBsum" id="7CQK"/>
<dbReference type="PDBsum" id="7K0I"/>
<dbReference type="PDBsum" id="7K0J"/>
<dbReference type="PDBsum" id="7K0K"/>
<dbReference type="PDBsum" id="7K0L"/>
<dbReference type="PDBsum" id="7K0M"/>
<dbReference type="PDBsum" id="7K0N"/>
<dbReference type="PDBsum" id="7K0O"/>
<dbReference type="PDBsum" id="7K0P"/>
<dbReference type="PDBsum" id="7K0Q"/>
<dbReference type="PDBsum" id="7YIU"/>
<dbReference type="PDBsum" id="7YIY"/>
<dbReference type="PDBsum" id="7YJ1"/>
<dbReference type="PDBsum" id="7YJ2"/>
<dbReference type="EMDB" id="EMD-22598"/>
<dbReference type="EMDB" id="EMD-22599"/>
<dbReference type="EMDB" id="EMD-22600"/>
<dbReference type="EMDB" id="EMD-22601"/>
<dbReference type="EMDB" id="EMD-22602"/>
<dbReference type="EMDB" id="EMD-22604"/>
<dbReference type="EMDB" id="EMD-22605"/>
<dbReference type="EMDB" id="EMD-22606"/>
<dbReference type="EMDB" id="EMD-22608"/>
<dbReference type="EMDB" id="EMD-30079"/>
<dbReference type="EMDB" id="EMD-30080"/>
<dbReference type="EMDB" id="EMD-30081"/>
<dbReference type="EMDB" id="EMD-30082"/>
<dbReference type="EMDB" id="EMD-30441"/>
<dbReference type="EMDB" id="EMD-30442"/>
<dbReference type="EMDB" id="EMD-33864"/>
<dbReference type="EMDB" id="EMD-33866"/>
<dbReference type="EMDB" id="EMD-33868"/>
<dbReference type="EMDB" id="EMD-33869"/>
<dbReference type="SMR" id="O15269"/>
<dbReference type="BioGRID" id="115809">
    <property type="interactions" value="185"/>
</dbReference>
<dbReference type="ComplexPortal" id="CPX-6663">
    <property type="entry name" value="Serine palmitoyltransferase complex, SPTLC1-SPTLC2-SPTSSA variant"/>
</dbReference>
<dbReference type="ComplexPortal" id="CPX-6664">
    <property type="entry name" value="Serine palmitoyltransferase complex, SPTLC1-SPTLC2-SPTSSB variant"/>
</dbReference>
<dbReference type="ComplexPortal" id="CPX-6665">
    <property type="entry name" value="Serine palmitoyltransferase complex, SPTLC1-SPTLC3-SPTSSA variant"/>
</dbReference>
<dbReference type="ComplexPortal" id="CPX-6681">
    <property type="entry name" value="Serine palmitoyltransferase complex, SPTLC1-SPTLC3-SPTSSB variant"/>
</dbReference>
<dbReference type="CORUM" id="O15269"/>
<dbReference type="DIP" id="DIP-45626N"/>
<dbReference type="FunCoup" id="O15269">
    <property type="interactions" value="3163"/>
</dbReference>
<dbReference type="IntAct" id="O15269">
    <property type="interactions" value="123"/>
</dbReference>
<dbReference type="MINT" id="O15269"/>
<dbReference type="STRING" id="9606.ENSP00000262554"/>
<dbReference type="BindingDB" id="O15269"/>
<dbReference type="ChEMBL" id="CHEMBL1250343"/>
<dbReference type="DrugBank" id="DB00114">
    <property type="generic name" value="Pyridoxal phosphate"/>
</dbReference>
<dbReference type="DrugBank" id="DB00133">
    <property type="generic name" value="Serine"/>
</dbReference>
<dbReference type="GlyGen" id="O15269">
    <property type="glycosylation" value="1 site, 1 O-linked glycan (1 site)"/>
</dbReference>
<dbReference type="iPTMnet" id="O15269"/>
<dbReference type="MetOSite" id="O15269"/>
<dbReference type="PhosphoSitePlus" id="O15269"/>
<dbReference type="SwissPalm" id="O15269"/>
<dbReference type="BioMuta" id="SPTLC1"/>
<dbReference type="jPOST" id="O15269"/>
<dbReference type="MassIVE" id="O15269"/>
<dbReference type="PaxDb" id="9606-ENSP00000262554"/>
<dbReference type="PeptideAtlas" id="O15269"/>
<dbReference type="ProteomicsDB" id="48557">
    <molecule id="O15269-1"/>
</dbReference>
<dbReference type="ProteomicsDB" id="48558">
    <molecule id="O15269-2"/>
</dbReference>
<dbReference type="Pumba" id="O15269"/>
<dbReference type="Antibodypedia" id="2269">
    <property type="antibodies" value="395 antibodies from 37 providers"/>
</dbReference>
<dbReference type="DNASU" id="10558"/>
<dbReference type="Ensembl" id="ENST00000262554.7">
    <molecule id="O15269-1"/>
    <property type="protein sequence ID" value="ENSP00000262554.2"/>
    <property type="gene ID" value="ENSG00000090054.16"/>
</dbReference>
<dbReference type="Ensembl" id="ENST00000337841.4">
    <molecule id="O15269-2"/>
    <property type="protein sequence ID" value="ENSP00000337635.4"/>
    <property type="gene ID" value="ENSG00000090054.16"/>
</dbReference>
<dbReference type="Ensembl" id="ENST00000690139.1">
    <molecule id="O15269-2"/>
    <property type="protein sequence ID" value="ENSP00000510483.1"/>
    <property type="gene ID" value="ENSG00000090054.16"/>
</dbReference>
<dbReference type="GeneID" id="10558"/>
<dbReference type="KEGG" id="hsa:10558"/>
<dbReference type="MANE-Select" id="ENST00000262554.7">
    <property type="protein sequence ID" value="ENSP00000262554.2"/>
    <property type="RefSeq nucleotide sequence ID" value="NM_006415.4"/>
    <property type="RefSeq protein sequence ID" value="NP_006406.1"/>
</dbReference>
<dbReference type="UCSC" id="uc004arl.3">
    <molecule id="O15269-1"/>
    <property type="organism name" value="human"/>
</dbReference>
<dbReference type="AGR" id="HGNC:11277"/>
<dbReference type="CTD" id="10558"/>
<dbReference type="DisGeNET" id="10558"/>
<dbReference type="GeneCards" id="SPTLC1"/>
<dbReference type="GeneReviews" id="SPTLC1"/>
<dbReference type="HGNC" id="HGNC:11277">
    <property type="gene designation" value="SPTLC1"/>
</dbReference>
<dbReference type="HPA" id="ENSG00000090054">
    <property type="expression patterns" value="Low tissue specificity"/>
</dbReference>
<dbReference type="MalaCards" id="SPTLC1"/>
<dbReference type="MIM" id="162400">
    <property type="type" value="phenotype"/>
</dbReference>
<dbReference type="MIM" id="605712">
    <property type="type" value="gene"/>
</dbReference>
<dbReference type="MIM" id="620285">
    <property type="type" value="phenotype"/>
</dbReference>
<dbReference type="neXtProt" id="NX_O15269"/>
<dbReference type="OpenTargets" id="ENSG00000090054"/>
<dbReference type="Orphanet" id="36386">
    <property type="disease" value="Hereditary sensory and autonomic neuropathy type 1"/>
</dbReference>
<dbReference type="Orphanet" id="300605">
    <property type="disease" value="Juvenile amyotrophic lateral sclerosis"/>
</dbReference>
<dbReference type="PharmGKB" id="PA36106"/>
<dbReference type="VEuPathDB" id="HostDB:ENSG00000090054"/>
<dbReference type="eggNOG" id="KOG1358">
    <property type="taxonomic scope" value="Eukaryota"/>
</dbReference>
<dbReference type="GeneTree" id="ENSGT00550000074872"/>
<dbReference type="HOGENOM" id="CLU_015846_0_1_1"/>
<dbReference type="InParanoid" id="O15269"/>
<dbReference type="OMA" id="LTKYGCG"/>
<dbReference type="OrthoDB" id="3168162at2759"/>
<dbReference type="PAN-GO" id="O15269">
    <property type="GO annotations" value="4 GO annotations based on evolutionary models"/>
</dbReference>
<dbReference type="PhylomeDB" id="O15269"/>
<dbReference type="TreeFam" id="TF314877"/>
<dbReference type="BioCyc" id="MetaCyc:HS01673-MONOMER"/>
<dbReference type="BRENDA" id="2.3.1.50">
    <property type="organism ID" value="2681"/>
</dbReference>
<dbReference type="PathwayCommons" id="O15269"/>
<dbReference type="Reactome" id="R-HSA-1660661">
    <property type="pathway name" value="Sphingolipid de novo biosynthesis"/>
</dbReference>
<dbReference type="SABIO-RK" id="O15269"/>
<dbReference type="SignaLink" id="O15269"/>
<dbReference type="SIGNOR" id="O15269"/>
<dbReference type="UniPathway" id="UPA00222"/>
<dbReference type="BioGRID-ORCS" id="10558">
    <property type="hits" value="265 hits in 1179 CRISPR screens"/>
</dbReference>
<dbReference type="ChiTaRS" id="SPTLC1">
    <property type="organism name" value="human"/>
</dbReference>
<dbReference type="GeneWiki" id="SPTLC1"/>
<dbReference type="GenomeRNAi" id="10558"/>
<dbReference type="Pharos" id="O15269">
    <property type="development level" value="Tchem"/>
</dbReference>
<dbReference type="PRO" id="PR:O15269"/>
<dbReference type="Proteomes" id="UP000005640">
    <property type="component" value="Chromosome 9"/>
</dbReference>
<dbReference type="RNAct" id="O15269">
    <property type="molecule type" value="protein"/>
</dbReference>
<dbReference type="Bgee" id="ENSG00000090054">
    <property type="expression patterns" value="Expressed in esophagus squamous epithelium and 210 other cell types or tissues"/>
</dbReference>
<dbReference type="ExpressionAtlas" id="O15269">
    <property type="expression patterns" value="baseline and differential"/>
</dbReference>
<dbReference type="GO" id="GO:0005783">
    <property type="term" value="C:endoplasmic reticulum"/>
    <property type="evidence" value="ECO:0000314"/>
    <property type="project" value="HPA"/>
</dbReference>
<dbReference type="GO" id="GO:0005789">
    <property type="term" value="C:endoplasmic reticulum membrane"/>
    <property type="evidence" value="ECO:0000304"/>
    <property type="project" value="Reactome"/>
</dbReference>
<dbReference type="GO" id="GO:0017059">
    <property type="term" value="C:serine palmitoyltransferase complex"/>
    <property type="evidence" value="ECO:0000314"/>
    <property type="project" value="UniProtKB"/>
</dbReference>
<dbReference type="GO" id="GO:0030170">
    <property type="term" value="F:pyridoxal phosphate binding"/>
    <property type="evidence" value="ECO:0007669"/>
    <property type="project" value="InterPro"/>
</dbReference>
<dbReference type="GO" id="GO:0004758">
    <property type="term" value="F:serine C-palmitoyltransferase activity"/>
    <property type="evidence" value="ECO:0000314"/>
    <property type="project" value="UniProtKB"/>
</dbReference>
<dbReference type="GO" id="GO:0046513">
    <property type="term" value="P:ceramide biosynthetic process"/>
    <property type="evidence" value="ECO:0000314"/>
    <property type="project" value="MGI"/>
</dbReference>
<dbReference type="GO" id="GO:1904504">
    <property type="term" value="P:positive regulation of lipophagy"/>
    <property type="evidence" value="ECO:0000314"/>
    <property type="project" value="MGI"/>
</dbReference>
<dbReference type="GO" id="GO:1904649">
    <property type="term" value="P:regulation of fat cell apoptotic process"/>
    <property type="evidence" value="ECO:0000250"/>
    <property type="project" value="UniProtKB"/>
</dbReference>
<dbReference type="GO" id="GO:0046511">
    <property type="term" value="P:sphinganine biosynthetic process"/>
    <property type="evidence" value="ECO:0007669"/>
    <property type="project" value="Ensembl"/>
</dbReference>
<dbReference type="GO" id="GO:0030148">
    <property type="term" value="P:sphingolipid biosynthetic process"/>
    <property type="evidence" value="ECO:0000314"/>
    <property type="project" value="MGI"/>
</dbReference>
<dbReference type="GO" id="GO:0006665">
    <property type="term" value="P:sphingolipid metabolic process"/>
    <property type="evidence" value="ECO:0000304"/>
    <property type="project" value="ProtInc"/>
</dbReference>
<dbReference type="GO" id="GO:0006686">
    <property type="term" value="P:sphingomyelin biosynthetic process"/>
    <property type="evidence" value="ECO:0007669"/>
    <property type="project" value="Ensembl"/>
</dbReference>
<dbReference type="GO" id="GO:0046512">
    <property type="term" value="P:sphingosine biosynthetic process"/>
    <property type="evidence" value="ECO:0000314"/>
    <property type="project" value="ComplexPortal"/>
</dbReference>
<dbReference type="FunFam" id="3.40.640.10:FF:000049">
    <property type="entry name" value="serine palmitoyltransferase 1 isoform X1"/>
    <property type="match status" value="1"/>
</dbReference>
<dbReference type="Gene3D" id="3.90.1150.10">
    <property type="entry name" value="Aspartate Aminotransferase, domain 1"/>
    <property type="match status" value="1"/>
</dbReference>
<dbReference type="Gene3D" id="3.40.640.10">
    <property type="entry name" value="Type I PLP-dependent aspartate aminotransferase-like (Major domain)"/>
    <property type="match status" value="1"/>
</dbReference>
<dbReference type="InterPro" id="IPR004839">
    <property type="entry name" value="Aminotransferase_I/II_large"/>
</dbReference>
<dbReference type="InterPro" id="IPR050087">
    <property type="entry name" value="AON_synthase_class-II"/>
</dbReference>
<dbReference type="InterPro" id="IPR015424">
    <property type="entry name" value="PyrdxlP-dep_Trfase"/>
</dbReference>
<dbReference type="InterPro" id="IPR015421">
    <property type="entry name" value="PyrdxlP-dep_Trfase_major"/>
</dbReference>
<dbReference type="InterPro" id="IPR015422">
    <property type="entry name" value="PyrdxlP-dep_Trfase_small"/>
</dbReference>
<dbReference type="PANTHER" id="PTHR13693">
    <property type="entry name" value="CLASS II AMINOTRANSFERASE/8-AMINO-7-OXONONANOATE SYNTHASE"/>
    <property type="match status" value="1"/>
</dbReference>
<dbReference type="PANTHER" id="PTHR13693:SF2">
    <property type="entry name" value="SERINE PALMITOYLTRANSFERASE 1"/>
    <property type="match status" value="1"/>
</dbReference>
<dbReference type="Pfam" id="PF00155">
    <property type="entry name" value="Aminotran_1_2"/>
    <property type="match status" value="1"/>
</dbReference>
<dbReference type="SUPFAM" id="SSF53383">
    <property type="entry name" value="PLP-dependent transferases"/>
    <property type="match status" value="1"/>
</dbReference>
<comment type="function">
    <text evidence="2 10 11 23 24 27">Component of the serine palmitoyltransferase multisubunit enzyme (SPT) that catalyzes the initial and rate-limiting step in sphingolipid biosynthesis by condensing L-serine and activated acyl-CoA (most commonly palmitoyl-CoA) to form long-chain bases. The SPT complex is also composed of SPTLC2 or SPTLC3 and SPTSSA or SPTSSB. Within this complex, the heterodimer with SPTLC2 or SPTLC3 forms the catalytic core (PubMed:19416851, PubMed:33558762, PubMed:36170811). The composition of the serine palmitoyltransferase (SPT) complex determines the substrate preference (PubMed:19416851, PubMed:33558762). The SPTLC1-SPTLC2-SPTSSA complex shows a strong preference for C16-CoA substrate, while the SPTLC1-SPTLC3-SPTSSA isozyme uses both C14-CoA and C16-CoA as substrates, with a slight preference for C14-CoA (PubMed:19416851, PubMed:19648650). The SPTLC1-SPTLC2-SPTSSB complex shows a strong preference for C18-CoA substrate, while the SPTLC1-SPTLC3-SPTSSB isozyme displays an ability to use a broader range of acyl-CoAs, without apparent preference (PubMed:19416851, PubMed:19648650, PubMed:33558761, PubMed:33558762). Required for adipocyte cell viability and metabolic homeostasis (By similarity).</text>
</comment>
<comment type="catalytic activity">
    <reaction evidence="10">
        <text>L-serine + hexadecanoyl-CoA + H(+) = 3-oxosphinganine + CO2 + CoA</text>
        <dbReference type="Rhea" id="RHEA:14761"/>
        <dbReference type="ChEBI" id="CHEBI:15378"/>
        <dbReference type="ChEBI" id="CHEBI:16526"/>
        <dbReference type="ChEBI" id="CHEBI:33384"/>
        <dbReference type="ChEBI" id="CHEBI:57287"/>
        <dbReference type="ChEBI" id="CHEBI:57379"/>
        <dbReference type="ChEBI" id="CHEBI:58299"/>
        <dbReference type="EC" id="2.3.1.50"/>
    </reaction>
    <physiologicalReaction direction="left-to-right" evidence="10">
        <dbReference type="Rhea" id="RHEA:14762"/>
    </physiologicalReaction>
</comment>
<comment type="catalytic activity">
    <reaction evidence="10">
        <text>octadecanoyl-CoA + L-serine + H(+) = 3-oxoeicosasphinganine + CO2 + CoA</text>
        <dbReference type="Rhea" id="RHEA:33683"/>
        <dbReference type="ChEBI" id="CHEBI:15378"/>
        <dbReference type="ChEBI" id="CHEBI:16526"/>
        <dbReference type="ChEBI" id="CHEBI:33384"/>
        <dbReference type="ChEBI" id="CHEBI:57287"/>
        <dbReference type="ChEBI" id="CHEBI:57394"/>
        <dbReference type="ChEBI" id="CHEBI:65073"/>
    </reaction>
    <physiologicalReaction direction="left-to-right" evidence="10">
        <dbReference type="Rhea" id="RHEA:33684"/>
    </physiologicalReaction>
</comment>
<comment type="catalytic activity">
    <reaction evidence="10">
        <text>tetradecanoyl-CoA + L-serine + H(+) = 3-oxohexadecasphinganine + CO2 + CoA</text>
        <dbReference type="Rhea" id="RHEA:35675"/>
        <dbReference type="ChEBI" id="CHEBI:15378"/>
        <dbReference type="ChEBI" id="CHEBI:16526"/>
        <dbReference type="ChEBI" id="CHEBI:33384"/>
        <dbReference type="ChEBI" id="CHEBI:57287"/>
        <dbReference type="ChEBI" id="CHEBI:57385"/>
        <dbReference type="ChEBI" id="CHEBI:71007"/>
    </reaction>
    <physiologicalReaction direction="left-to-right" evidence="10">
        <dbReference type="Rhea" id="RHEA:35676"/>
    </physiologicalReaction>
</comment>
<comment type="catalytic activity">
    <reaction evidence="10">
        <text>dodecanoyl-CoA + L-serine + H(+) = 3-oxotetradecasphinganine + CO2 + CoA</text>
        <dbReference type="Rhea" id="RHEA:35679"/>
        <dbReference type="ChEBI" id="CHEBI:15378"/>
        <dbReference type="ChEBI" id="CHEBI:16526"/>
        <dbReference type="ChEBI" id="CHEBI:33384"/>
        <dbReference type="ChEBI" id="CHEBI:57287"/>
        <dbReference type="ChEBI" id="CHEBI:57375"/>
        <dbReference type="ChEBI" id="CHEBI:71008"/>
    </reaction>
    <physiologicalReaction direction="left-to-right" evidence="10">
        <dbReference type="Rhea" id="RHEA:35680"/>
    </physiologicalReaction>
</comment>
<comment type="cofactor">
    <cofactor evidence="1">
        <name>pyridoxal 5'-phosphate</name>
        <dbReference type="ChEBI" id="CHEBI:597326"/>
    </cofactor>
</comment>
<comment type="activity regulation">
    <text evidence="29 31">SPT complex catalytic activity is negatively regulated by ORMDL proteins, including ORMDL3, in the presence of ceramides (PubMed:37308477). This mechanism allows to maintain ceramide levels at sufficient concentrations for the production of complex sphingolipids, but which prevents the accumulation of ceramides to levels that trigger apoptosis (Probable).</text>
</comment>
<comment type="biophysicochemical properties">
    <kinetics>
        <KM evidence="14">0.75 mM for L-serine</KM>
        <KM evidence="23">0.3 mM for L-serine</KM>
        <Vmax evidence="14">1350.0 pmol/min/mg enzyme</Vmax>
    </kinetics>
</comment>
<comment type="pathway">
    <text evidence="10">Lipid metabolism; sphingolipid metabolism.</text>
</comment>
<comment type="subunit">
    <text evidence="2 9 10 13 22 23 24 25 29">Component of the serine palmitoyltransferase (SPT) complex, which is also composed of SPTLC2 or SPTLC3 and SPTSSA or SPTSSB (PubMed:19132419, PubMed:19416851, PubMed:33558761, PubMed:33558762, PubMed:37308477). The heterodimer consisting of SPTLC1 and SPTLC2/SPTLC3 forms the catalytic core of the enzyme, while SPTSSA or SPTSSB subunits determine substrate specificity (PubMed:33558762, PubMed:37308477). SPT also interacts with ORMDL proteins, especially ORMDL3, which negatively regulate SPT activity in the presence of ceramides (PubMed:20182505, PubMed:30700557, PubMed:33558762, PubMed:34059824, PubMed:37308477). Forms dimers of heterodimers with SPTLC2 (PubMed:33558761, PubMed:33558762). Interacts with RTN4 (isoform B) (By similarity).</text>
</comment>
<comment type="interaction">
    <interactant intactId="EBI-1044323">
        <id>O15269</id>
    </interactant>
    <interactant intactId="EBI-721750">
        <id>Q8N138</id>
        <label>ORMDL3</label>
    </interactant>
    <organismsDiffer>false</organismsDiffer>
    <experiments>3</experiments>
</comment>
<comment type="interaction">
    <interactant intactId="EBI-1044323">
        <id>O15269</id>
    </interactant>
    <interactant intactId="EBI-766136">
        <id>O15270</id>
        <label>SPTLC2</label>
    </interactant>
    <organismsDiffer>false</organismsDiffer>
    <experiments>3</experiments>
</comment>
<comment type="interaction">
    <interactant intactId="EBI-1044323">
        <id>O15269</id>
    </interactant>
    <interactant intactId="EBI-11614219">
        <id>Q9NUV7</id>
        <label>SPTLC3</label>
    </interactant>
    <organismsDiffer>false</organismsDiffer>
    <experiments>3</experiments>
</comment>
<comment type="interaction">
    <interactant intactId="EBI-25912901">
        <id>O15269-2</id>
    </interactant>
    <interactant intactId="EBI-5661893">
        <id>Q86SG2</id>
        <label>ANKRD23</label>
    </interactant>
    <organismsDiffer>false</organismsDiffer>
    <experiments>3</experiments>
</comment>
<comment type="interaction">
    <interactant intactId="EBI-25912901">
        <id>O15269-2</id>
    </interactant>
    <interactant intactId="EBI-12891828">
        <id>Q6ZR37</id>
        <label>PLEKHG7</label>
    </interactant>
    <organismsDiffer>false</organismsDiffer>
    <experiments>3</experiments>
</comment>
<comment type="interaction">
    <interactant intactId="EBI-25912901">
        <id>O15269-2</id>
    </interactant>
    <interactant intactId="EBI-2822550">
        <id>Q8IYM2</id>
        <label>SLFN12</label>
    </interactant>
    <organismsDiffer>false</organismsDiffer>
    <experiments>3</experiments>
</comment>
<comment type="interaction">
    <interactant intactId="EBI-25912901">
        <id>O15269-2</id>
    </interactant>
    <interactant intactId="EBI-3942425">
        <id>Q8WXH5</id>
        <label>SOCS4</label>
    </interactant>
    <organismsDiffer>false</organismsDiffer>
    <experiments>3</experiments>
</comment>
<comment type="interaction">
    <interactant intactId="EBI-25912901">
        <id>O15269-2</id>
    </interactant>
    <interactant intactId="EBI-357085">
        <id>Q9UNE7</id>
        <label>STUB1</label>
    </interactant>
    <organismsDiffer>false</organismsDiffer>
    <experiments>3</experiments>
</comment>
<comment type="subcellular location">
    <subcellularLocation>
        <location evidence="15">Endoplasmic reticulum membrane</location>
        <topology evidence="2">Single-pass membrane protein</topology>
    </subcellularLocation>
</comment>
<comment type="alternative products">
    <event type="alternative splicing"/>
    <isoform>
        <id>O15269-1</id>
        <name>1</name>
        <sequence type="displayed"/>
    </isoform>
    <isoform>
        <id>O15269-2</id>
        <name>2</name>
        <sequence type="described" ref="VSP_043127 VSP_043128"/>
    </isoform>
</comment>
<comment type="tissue specificity">
    <text evidence="7">Widely expressed. Not detected in small intestine.</text>
</comment>
<comment type="induction">
    <text evidence="16">Expression at protein level is highly increased in brains of patients with Alzheimer disease. No changes are observed at mRNA level.</text>
</comment>
<comment type="domain">
    <text evidence="24">The transmembrane domain is involved in the interaction with ORMDL3.</text>
</comment>
<comment type="PTM">
    <text evidence="19">Phosphorylation at Tyr-164 inhibits activity and promotes cell survival.</text>
</comment>
<comment type="disease" evidence="25 26 28 29">
    <disease id="DI-06629">
        <name>Amyotrophic lateral sclerosis 27, juvenile</name>
        <acronym>ALS27</acronym>
        <description>A form of amyotrophic lateral sclerosis, a neurodegenerative disorder affecting upper motor neurons in the brain and lower motor neurons in the brain stem and spinal cord, resulting in fatal paralysis. Sensory abnormalities are absent. The pathologic hallmarks of the disease include pallor of the corticospinal tract due to loss of motor neurons, presence of ubiquitin-positive inclusions within surviving motor neurons, and deposition of pathologic aggregates. The etiology of amyotrophic lateral sclerosis is likely to be multifactorial, involving both genetic and environmental factors. The disease is inherited in 5-10% of the cases. ALS27 is an autosomal dominant form manifesting as toe walking and gait abnormalities in early childhood.</description>
        <dbReference type="MIM" id="620285"/>
    </disease>
    <text evidence="25">The disease is caused by variants affecting the gene represented in this entry. Variants associated with ALS27 tend to disrupt the normal homeostatic regulation of serine palmitoyltransferase (SPT) by ORMDL proteins, resulting in up-regulated SPT activity and elevated levels of canonical SPT products.</text>
</comment>
<comment type="disease" evidence="4 9 12 14 15 17 18 20 21">
    <disease id="DI-00547">
        <name>Neuropathy, hereditary sensory and autonomic, 1A</name>
        <acronym>HSAN1A</acronym>
        <description>A form of hereditary sensory and autonomic neuropathy, a genetically and clinically heterogeneous group of disorders characterized by degeneration of dorsal root and autonomic ganglion cells, and by prominent sensory abnormalities with a variable degree of motor and autonomic dysfunction. The neurological phenotype is often complicated by severe infections, osteomyelitis, and amputations. HSAN1A is an autosomal dominant axonal form with onset in the second or third decades. Initial symptoms are loss of pain, touch, heat, and cold sensation over the feet, followed by distal muscle wasting and weakness. Loss of pain sensation leads to chronic skin ulcers and distal amputations.</description>
        <dbReference type="MIM" id="162400"/>
    </disease>
    <text evidence="32">The disease is caused by variants affecting the gene represented in this entry. Variants associated with HSAN1A tend to increase serine palmitoyltransferase (SPT) usage of alanine or glycine rather than serine, resulting in deoxysphingolipid synthesis. Deoxysphingolipids cannot be efficiently degraded by the cell machinery and cause cell toxicity.</text>
</comment>
<comment type="similarity">
    <text evidence="31">Belongs to the class-II pyridoxal-phosphate-dependent aminotransferase family.</text>
</comment>
<organism>
    <name type="scientific">Homo sapiens</name>
    <name type="common">Human</name>
    <dbReference type="NCBI Taxonomy" id="9606"/>
    <lineage>
        <taxon>Eukaryota</taxon>
        <taxon>Metazoa</taxon>
        <taxon>Chordata</taxon>
        <taxon>Craniata</taxon>
        <taxon>Vertebrata</taxon>
        <taxon>Euteleostomi</taxon>
        <taxon>Mammalia</taxon>
        <taxon>Eutheria</taxon>
        <taxon>Euarchontoglires</taxon>
        <taxon>Primates</taxon>
        <taxon>Haplorrhini</taxon>
        <taxon>Catarrhini</taxon>
        <taxon>Hominidae</taxon>
        <taxon>Homo</taxon>
    </lineage>
</organism>
<name>SPTC1_HUMAN</name>
<feature type="chain" id="PRO_0000163853" description="Serine palmitoyltransferase 1">
    <location>
        <begin position="1"/>
        <end position="473"/>
    </location>
</feature>
<feature type="topological domain" description="Lumenal" evidence="3">
    <location>
        <begin position="1"/>
        <end position="15"/>
    </location>
</feature>
<feature type="transmembrane region" description="Helical" evidence="3">
    <location>
        <begin position="16"/>
        <end position="36"/>
    </location>
</feature>
<feature type="topological domain" description="Cytoplasmic" evidence="3">
    <location>
        <begin position="37"/>
        <end position="473"/>
    </location>
</feature>
<feature type="region of interest" description="Interaction with SPTLC2" evidence="24">
    <location>
        <begin position="1"/>
        <end position="66"/>
    </location>
</feature>
<feature type="modified residue" description="Phosphotyrosine; by ABL" evidence="19">
    <location>
        <position position="164"/>
    </location>
</feature>
<feature type="splice variant" id="VSP_043127" description="In isoform 2." evidence="30">
    <original>D</original>
    <variation>E</variation>
    <location>
        <position position="143"/>
    </location>
</feature>
<feature type="splice variant" id="VSP_043128" description="In isoform 2." evidence="30">
    <location>
        <begin position="144"/>
        <end position="473"/>
    </location>
</feature>
<feature type="sequence variant" id="VAR_088446" description="In ALS27; the underlying nucleotide substitution predominantly results in exon 2 skipping; in patient's whole blood sample, only exon 2 deletion was observed, but not the missense variant per se; when exon 2 deletion variant is expressed in induced pluripotent stem cells (iPSC) differentiated into motor neuron-like cells, increased production of sphinganine and ceramides is observed; when exon 2 deletion variant is transfected into HEK293 cells, decreased response to inhibition mediated by ORMDL3 or ceramide is observed; dbSNP:rs879254294." evidence="25 26">
    <original>A</original>
    <variation>S</variation>
    <location>
        <position position="20"/>
    </location>
</feature>
<feature type="sequence variant" id="VAR_088447" description="In ALS27; increased production of sphinganine and ceramides, when expressed in induced pluripotent stem cells (iPSC) differentiated into motor neuron-like cells; decreased response to inhibition mediated by ORMDL3 and ceramide; no effect on the interaction with ORMDL3; dbSNP:rs1554716504." evidence="25 29">
    <original>Y</original>
    <variation>F</variation>
    <location>
        <position position="23"/>
    </location>
</feature>
<feature type="sequence variant" id="VAR_088448" description="In ALS27; uncertain significance." evidence="28">
    <original>L</original>
    <variation>R</variation>
    <location>
        <position position="38"/>
    </location>
</feature>
<feature type="sequence variant" id="VAR_088449" description="In ALS27; increased production of sphinganine and ceramides, when expressed in induced pluripotent stem cells (iPSC) differentiated into motor neuron-like cells; decreased response to inhibition mediated by ORMDL3 and ceramide; no effect on the interaction with ORMDL3; dbSNP:rs1197928094." evidence="25 26">
    <location>
        <position position="39"/>
    </location>
</feature>
<feature type="sequence variant" id="VAR_088450" description="In ALS27; increased production of sphinganine and ceramides, when expressed in induced pluripotent stem cells (iPSC) differentiated into motor neuron-like cells; decreased response to inhibition mediated by ORMDL3 and ceramide; no effect on the interaction with ORMDL3." evidence="25">
    <location>
        <begin position="40"/>
        <end position="41"/>
    </location>
</feature>
<feature type="sequence variant" id="VAR_011392" description="In HSAN1A; inactive in the heterodimeric SPT complex; largely reduced canonical activity towards serine; contrary to wild-type, uses alanine as substrate leading to the formation of 1-deoxysphinganine (1-deoxySa); does not affect the interaction with SPTLC2; dbSNP:rs119482082." evidence="4 9 14 15 17">
    <original>C</original>
    <variation>W</variation>
    <location>
        <position position="133"/>
    </location>
</feature>
<feature type="sequence variant" id="VAR_011393" description="In HSAN1A; reduced canonical activity towards serine; does not affect the interaction with SPTLC2; dbSNP:rs119482081." evidence="4 9">
    <original>C</original>
    <variation>Y</variation>
    <location>
        <position position="133"/>
    </location>
</feature>
<feature type="sequence variant" id="VAR_011394" description="In HSAN1A; reduced canonical activity towards serine; does not affect the interaction with SPTLC2; dbSNP:rs119482083." evidence="4 9 21">
    <original>V</original>
    <variation>D</variation>
    <location>
        <position position="144"/>
    </location>
</feature>
<feature type="sequence variant" id="VAR_037889" description="In dbSNP:rs45461899." evidence="8">
    <original>R</original>
    <variation>L</variation>
    <location>
        <position position="151"/>
    </location>
</feature>
<feature type="sequence variant" id="VAR_036610" description="In a breast cancer sample; somatic mutation; dbSNP:rs542876370." evidence="6">
    <original>R</original>
    <variation>W</variation>
    <location>
        <position position="239"/>
    </location>
</feature>
<feature type="sequence variant" id="VAR_068476" description="Found in a patient with HSAN1A; uncertain significance; dbSNP:rs768841574." evidence="17">
    <original>A</original>
    <variation>G</variation>
    <location>
        <position position="310"/>
    </location>
</feature>
<feature type="sequence variant" id="VAR_066245" description="In HSAN1A; severe form with early onset; reduced canonical activity towards serine and increased production of deoxysphingolipids; no effect on subcellular location at the endoplasmic reticulum; dbSNP:rs267607087." evidence="12 15 20">
    <original>S</original>
    <variation>F</variation>
    <location>
        <position position="331"/>
    </location>
</feature>
<feature type="sequence variant" id="VAR_073294" description="In ALS27 and HSAN1A; reduced canonical activity towards serine and increased production of deoxysphingolipids; dbSNP:rs267607087." evidence="18 26">
    <original>S</original>
    <variation>Y</variation>
    <location>
        <position position="331"/>
    </location>
</feature>
<feature type="sequence variant" id="VAR_066246" description="In HSAN1A; reduced canonical activity towards serine and increased production of deoxysphingolipids; no effect on subcellular location at the endoplasmic reticulum; dbSNP:rs267607088." evidence="12 15">
    <original>A</original>
    <variation>V</variation>
    <location>
        <position position="352"/>
    </location>
</feature>
<feature type="sequence variant" id="VAR_037890" description="Does not affect catalytic activity towards serine; does not affect the interaction with SPTLC2; dbSNP:rs119482084." evidence="5 9 12">
    <original>G</original>
    <variation>A</variation>
    <location>
        <position position="387"/>
    </location>
</feature>
<feature type="mutagenesis site" description="Decreased catalytic activity with L-serine and palmitoyl-CoA as substrates." evidence="24">
    <original>F</original>
    <variation>A</variation>
    <location>
        <position position="138"/>
    </location>
</feature>
<feature type="mutagenesis site" description="Increased serine palmitoyltransferase activity and sphingolipid content." evidence="19">
    <original>Y</original>
    <variation>F</variation>
    <location>
        <position position="164"/>
    </location>
</feature>
<feature type="mutagenesis site" description="Strongly decreased catalytic activity with L-serine and palmitoyl-CoA as substrates." evidence="24">
    <original>F</original>
    <variation>A</variation>
    <location>
        <position position="337"/>
    </location>
</feature>
<feature type="mutagenesis site" description="Decreased catalytic activity with L-serine and palmitoyl-CoA as substrates." evidence="24">
    <original>S</original>
    <variation>A</variation>
    <location>
        <position position="338"/>
    </location>
</feature>
<feature type="helix" evidence="55">
    <location>
        <begin position="11"/>
        <end position="18"/>
    </location>
</feature>
<feature type="helix" evidence="55">
    <location>
        <begin position="22"/>
        <end position="39"/>
    </location>
</feature>
<feature type="helix" evidence="52">
    <location>
        <begin position="54"/>
        <end position="63"/>
    </location>
</feature>
<feature type="helix" evidence="52">
    <location>
        <begin position="78"/>
        <end position="80"/>
    </location>
</feature>
<feature type="strand" evidence="53">
    <location>
        <begin position="85"/>
        <end position="87"/>
    </location>
</feature>
<feature type="strand" evidence="52">
    <location>
        <begin position="91"/>
        <end position="95"/>
    </location>
</feature>
<feature type="strand" evidence="52">
    <location>
        <begin position="98"/>
        <end position="102"/>
    </location>
</feature>
<feature type="strand" evidence="51">
    <location>
        <begin position="108"/>
        <end position="110"/>
    </location>
</feature>
<feature type="helix" evidence="52">
    <location>
        <begin position="115"/>
        <end position="128"/>
    </location>
</feature>
<feature type="turn" evidence="52">
    <location>
        <begin position="136"/>
        <end position="139"/>
    </location>
</feature>
<feature type="helix" evidence="52">
    <location>
        <begin position="143"/>
        <end position="155"/>
    </location>
</feature>
<feature type="strand" evidence="52">
    <location>
        <begin position="159"/>
        <end position="166"/>
    </location>
</feature>
<feature type="helix" evidence="52">
    <location>
        <begin position="167"/>
        <end position="178"/>
    </location>
</feature>
<feature type="strand" evidence="52">
    <location>
        <begin position="184"/>
        <end position="188"/>
    </location>
</feature>
<feature type="helix" evidence="52">
    <location>
        <begin position="193"/>
        <end position="201"/>
    </location>
</feature>
<feature type="strand" evidence="52">
    <location>
        <begin position="205"/>
        <end position="209"/>
    </location>
</feature>
<feature type="helix" evidence="52">
    <location>
        <begin position="214"/>
        <end position="230"/>
    </location>
</feature>
<feature type="helix" evidence="52">
    <location>
        <begin position="232"/>
        <end position="237"/>
    </location>
</feature>
<feature type="strand" evidence="52">
    <location>
        <begin position="240"/>
        <end position="247"/>
    </location>
</feature>
<feature type="turn" evidence="52">
    <location>
        <begin position="249"/>
        <end position="251"/>
    </location>
</feature>
<feature type="helix" evidence="52">
    <location>
        <begin position="257"/>
        <end position="267"/>
    </location>
</feature>
<feature type="strand" evidence="52">
    <location>
        <begin position="270"/>
        <end position="274"/>
    </location>
</feature>
<feature type="turn" evidence="52">
    <location>
        <begin position="276"/>
        <end position="281"/>
    </location>
</feature>
<feature type="strand" evidence="55">
    <location>
        <begin position="282"/>
        <end position="286"/>
    </location>
</feature>
<feature type="helix" evidence="52">
    <location>
        <begin position="289"/>
        <end position="293"/>
    </location>
</feature>
<feature type="helix" evidence="52">
    <location>
        <begin position="297"/>
        <end position="299"/>
    </location>
</feature>
<feature type="strand" evidence="52">
    <location>
        <begin position="301"/>
        <end position="306"/>
    </location>
</feature>
<feature type="strand" evidence="52">
    <location>
        <begin position="309"/>
        <end position="311"/>
    </location>
</feature>
<feature type="strand" evidence="52">
    <location>
        <begin position="316"/>
        <end position="320"/>
    </location>
</feature>
<feature type="helix" evidence="52">
    <location>
        <begin position="322"/>
        <end position="331"/>
    </location>
</feature>
<feature type="helix" evidence="52">
    <location>
        <begin position="333"/>
        <end position="336"/>
    </location>
</feature>
<feature type="helix" evidence="52">
    <location>
        <begin position="343"/>
        <end position="358"/>
    </location>
</feature>
<feature type="helix" evidence="52">
    <location>
        <begin position="362"/>
        <end position="377"/>
    </location>
</feature>
<feature type="strand" evidence="52">
    <location>
        <begin position="381"/>
        <end position="387"/>
    </location>
</feature>
<feature type="strand" evidence="52">
    <location>
        <begin position="392"/>
        <end position="400"/>
    </location>
</feature>
<feature type="helix" evidence="52">
    <location>
        <begin position="405"/>
        <end position="420"/>
    </location>
</feature>
<feature type="turn" evidence="52">
    <location>
        <begin position="421"/>
        <end position="423"/>
    </location>
</feature>
<feature type="turn" evidence="52">
    <location>
        <begin position="433"/>
        <end position="435"/>
    </location>
</feature>
<feature type="strand" evidence="50">
    <location>
        <begin position="436"/>
        <end position="438"/>
    </location>
</feature>
<feature type="strand" evidence="52">
    <location>
        <begin position="443"/>
        <end position="447"/>
    </location>
</feature>
<feature type="strand" evidence="54">
    <location>
        <begin position="450"/>
        <end position="452"/>
    </location>
</feature>
<feature type="helix" evidence="52">
    <location>
        <begin position="454"/>
        <end position="471"/>
    </location>
</feature>
<keyword id="KW-0002">3D-structure</keyword>
<keyword id="KW-0012">Acyltransferase</keyword>
<keyword id="KW-0025">Alternative splicing</keyword>
<keyword id="KW-0036">Amyotrophic lateral sclerosis</keyword>
<keyword id="KW-0225">Disease variant</keyword>
<keyword id="KW-0256">Endoplasmic reticulum</keyword>
<keyword id="KW-0443">Lipid metabolism</keyword>
<keyword id="KW-0472">Membrane</keyword>
<keyword id="KW-0523">Neurodegeneration</keyword>
<keyword id="KW-0622">Neuropathy</keyword>
<keyword id="KW-0597">Phosphoprotein</keyword>
<keyword id="KW-1267">Proteomics identification</keyword>
<keyword id="KW-0663">Pyridoxal phosphate</keyword>
<keyword id="KW-1185">Reference proteome</keyword>
<keyword id="KW-0746">Sphingolipid metabolism</keyword>
<keyword id="KW-0808">Transferase</keyword>
<keyword id="KW-0812">Transmembrane</keyword>
<keyword id="KW-1133">Transmembrane helix</keyword>
<protein>
    <recommendedName>
        <fullName>Serine palmitoyltransferase 1</fullName>
        <ecNumber evidence="10">2.3.1.50</ecNumber>
    </recommendedName>
    <alternativeName>
        <fullName>Long chain base biosynthesis protein 1</fullName>
        <shortName>LCB 1</shortName>
    </alternativeName>
    <alternativeName>
        <fullName>Serine-palmitoyl-CoA transferase 1</fullName>
        <shortName>SPT 1</shortName>
        <shortName>SPT1</shortName>
    </alternativeName>
</protein>